<comment type="function">
    <text evidence="3 6">Aquaporins form homotetrameric transmembrane channels, with each monomer independently mediating water transport across the plasma membrane along its osmotic gradient (PubMed:8812490). Unlike classical aquaporins, AQP6 is an intracellular channel with selective anion permeability, particularly for nitrate, and exhibits very low water permeability (By similarity). It may also facilitate the transport of gases, such as CO2 and NH4(+), as demonstrated in vitro (By similarity).</text>
</comment>
<comment type="catalytic activity">
    <reaction evidence="3">
        <text>nitrate(in) = nitrate(out)</text>
        <dbReference type="Rhea" id="RHEA:34923"/>
        <dbReference type="ChEBI" id="CHEBI:17632"/>
    </reaction>
</comment>
<comment type="catalytic activity">
    <reaction evidence="3">
        <text>iodide(out) = iodide(in)</text>
        <dbReference type="Rhea" id="RHEA:66324"/>
        <dbReference type="ChEBI" id="CHEBI:16382"/>
    </reaction>
</comment>
<comment type="catalytic activity">
    <reaction evidence="3">
        <text>bromide(in) = bromide(out)</text>
        <dbReference type="Rhea" id="RHEA:75383"/>
        <dbReference type="ChEBI" id="CHEBI:15858"/>
    </reaction>
</comment>
<comment type="catalytic activity">
    <reaction evidence="3">
        <text>chloride(in) = chloride(out)</text>
        <dbReference type="Rhea" id="RHEA:29823"/>
        <dbReference type="ChEBI" id="CHEBI:17996"/>
    </reaction>
</comment>
<comment type="catalytic activity">
    <reaction evidence="3">
        <text>Na(+)(in) = Na(+)(out)</text>
        <dbReference type="Rhea" id="RHEA:34963"/>
        <dbReference type="ChEBI" id="CHEBI:29101"/>
    </reaction>
</comment>
<comment type="catalytic activity">
    <reaction evidence="6">
        <text>H2O(in) = H2O(out)</text>
        <dbReference type="Rhea" id="RHEA:29667"/>
        <dbReference type="ChEBI" id="CHEBI:15377"/>
    </reaction>
</comment>
<comment type="catalytic activity">
    <reaction evidence="3">
        <text>CO2(out) = CO2(in)</text>
        <dbReference type="Rhea" id="RHEA:74891"/>
        <dbReference type="ChEBI" id="CHEBI:16526"/>
    </reaction>
</comment>
<comment type="catalytic activity">
    <reaction evidence="3">
        <text>NH4(+)(in) = NH4(+)(out)</text>
        <dbReference type="Rhea" id="RHEA:28747"/>
        <dbReference type="ChEBI" id="CHEBI:28938"/>
    </reaction>
</comment>
<comment type="subunit">
    <text evidence="2">Homotetramer; each monomer provides an independent solute pore.</text>
</comment>
<comment type="interaction">
    <interactant intactId="EBI-13059134">
        <id>Q13520</id>
    </interactant>
    <interactant intactId="EBI-8584087">
        <id>P45844-4</id>
        <label>ABCG1</label>
    </interactant>
    <organismsDiffer>false</organismsDiffer>
    <experiments>3</experiments>
</comment>
<comment type="interaction">
    <interactant intactId="EBI-13059134">
        <id>Q13520</id>
    </interactant>
    <interactant intactId="EBI-348517">
        <id>O95870</id>
        <label>ABHD16A</label>
    </interactant>
    <organismsDiffer>false</organismsDiffer>
    <experiments>3</experiments>
</comment>
<comment type="interaction">
    <interactant intactId="EBI-13059134">
        <id>Q13520</id>
    </interactant>
    <interactant intactId="EBI-2876927">
        <id>Q9ULC5</id>
        <label>ACSL5</label>
    </interactant>
    <organismsDiffer>false</organismsDiffer>
    <experiments>3</experiments>
</comment>
<comment type="interaction">
    <interactant intactId="EBI-13059134">
        <id>Q13520</id>
    </interactant>
    <interactant intactId="EBI-11277970">
        <id>Q9UHX3</id>
        <label>ADGRE2</label>
    </interactant>
    <organismsDiffer>false</organismsDiffer>
    <experiments>3</experiments>
</comment>
<comment type="interaction">
    <interactant intactId="EBI-13059134">
        <id>Q13520</id>
    </interactant>
    <interactant intactId="EBI-10827839">
        <id>Q15848</id>
        <label>ADIPOQ</label>
    </interactant>
    <organismsDiffer>false</organismsDiffer>
    <experiments>3</experiments>
</comment>
<comment type="interaction">
    <interactant intactId="EBI-13059134">
        <id>Q13520</id>
    </interactant>
    <interactant intactId="EBI-18509181">
        <id>Q6ZNB7</id>
        <label>AGMO</label>
    </interactant>
    <organismsDiffer>false</organismsDiffer>
    <experiments>3</experiments>
</comment>
<comment type="interaction">
    <interactant intactId="EBI-13059134">
        <id>Q13520</id>
    </interactant>
    <interactant intactId="EBI-2803601">
        <id>Q9NRZ7</id>
        <label>AGPAT3</label>
    </interactant>
    <organismsDiffer>false</organismsDiffer>
    <experiments>3</experiments>
</comment>
<comment type="interaction">
    <interactant intactId="EBI-13059134">
        <id>Q13520</id>
    </interactant>
    <interactant intactId="EBI-1754287">
        <id>Q9NRZ5</id>
        <label>AGPAT4</label>
    </interactant>
    <organismsDiffer>false</organismsDiffer>
    <experiments>3</experiments>
</comment>
<comment type="interaction">
    <interactant intactId="EBI-13059134">
        <id>Q13520</id>
    </interactant>
    <interactant intactId="EBI-11522760">
        <id>Q6RW13-2</id>
        <label>AGTRAP</label>
    </interactant>
    <organismsDiffer>false</organismsDiffer>
    <experiments>3</experiments>
</comment>
<comment type="interaction">
    <interactant intactId="EBI-13059134">
        <id>Q13520</id>
    </interactant>
    <interactant intactId="EBI-11957045">
        <id>Q9NVV5-2</id>
        <label>AIG1</label>
    </interactant>
    <organismsDiffer>false</organismsDiffer>
    <experiments>3</experiments>
</comment>
<comment type="interaction">
    <interactant intactId="EBI-13059134">
        <id>Q13520</id>
    </interactant>
    <interactant intactId="EBI-3904621">
        <id>P20292</id>
        <label>ALOX5AP</label>
    </interactant>
    <organismsDiffer>false</organismsDiffer>
    <experiments>3</experiments>
</comment>
<comment type="interaction">
    <interactant intactId="EBI-13059134">
        <id>Q13520</id>
    </interactant>
    <interactant intactId="EBI-12109402">
        <id>Q86W74-2</id>
        <label>ANKRD46</label>
    </interactant>
    <organismsDiffer>false</organismsDiffer>
    <experiments>3</experiments>
</comment>
<comment type="interaction">
    <interactant intactId="EBI-13059134">
        <id>Q13520</id>
    </interactant>
    <interactant intactId="EBI-17685278">
        <id>O75106</id>
        <label>AOC2</label>
    </interactant>
    <organismsDiffer>false</organismsDiffer>
    <experiments>3</experiments>
</comment>
<comment type="interaction">
    <interactant intactId="EBI-13059134">
        <id>Q13520</id>
    </interactant>
    <interactant intactId="EBI-1171525">
        <id>P02652</id>
        <label>APOA2</label>
    </interactant>
    <organismsDiffer>false</organismsDiffer>
    <experiments>3</experiments>
</comment>
<comment type="interaction">
    <interactant intactId="EBI-13059134">
        <id>Q13520</id>
    </interactant>
    <interactant intactId="EBI-745213">
        <id>P29972</id>
        <label>AQP1</label>
    </interactant>
    <organismsDiffer>false</organismsDiffer>
    <experiments>3</experiments>
</comment>
<comment type="interaction">
    <interactant intactId="EBI-13059134">
        <id>Q13520</id>
    </interactant>
    <interactant intactId="EBI-714543">
        <id>Q15041</id>
        <label>ARL6IP1</label>
    </interactant>
    <organismsDiffer>false</organismsDiffer>
    <experiments>3</experiments>
</comment>
<comment type="interaction">
    <interactant intactId="EBI-13059134">
        <id>Q13520</id>
    </interactant>
    <interactant intactId="EBI-2808844">
        <id>Q8N6S5</id>
        <label>ARL6IP6</label>
    </interactant>
    <organismsDiffer>false</organismsDiffer>
    <experiments>3</experiments>
</comment>
<comment type="interaction">
    <interactant intactId="EBI-13059134">
        <id>Q13520</id>
    </interactant>
    <interactant intactId="EBI-11724186">
        <id>Q9H2C2</id>
        <label>ARV1</label>
    </interactant>
    <organismsDiffer>false</organismsDiffer>
    <experiments>3</experiments>
</comment>
<comment type="interaction">
    <interactant intactId="EBI-13059134">
        <id>Q13520</id>
    </interactant>
    <interactant intactId="EBI-12069500">
        <id>Q9HD20-3</id>
        <label>ATP13A1</label>
    </interactant>
    <organismsDiffer>false</organismsDiffer>
    <experiments>3</experiments>
</comment>
<comment type="interaction">
    <interactant intactId="EBI-13059134">
        <id>Q13520</id>
    </interactant>
    <interactant intactId="EBI-721179">
        <id>P27449</id>
        <label>ATP6V0C</label>
    </interactant>
    <organismsDiffer>false</organismsDiffer>
    <experiments>3</experiments>
</comment>
<comment type="interaction">
    <interactant intactId="EBI-13059134">
        <id>Q13520</id>
    </interactant>
    <interactant intactId="EBI-749204">
        <id>O15155</id>
        <label>BET1</label>
    </interactant>
    <organismsDiffer>false</organismsDiffer>
    <experiments>3</experiments>
</comment>
<comment type="interaction">
    <interactant intactId="EBI-13059134">
        <id>Q13520</id>
    </interactant>
    <interactant intactId="EBI-3922513">
        <id>O95393</id>
        <label>BMP10</label>
    </interactant>
    <organismsDiffer>false</organismsDiffer>
    <experiments>3</experiments>
</comment>
<comment type="interaction">
    <interactant intactId="EBI-13059134">
        <id>Q13520</id>
    </interactant>
    <interactant intactId="EBI-12244618">
        <id>Q6PL45-2</id>
        <label>BRICD5</label>
    </interactant>
    <organismsDiffer>false</organismsDiffer>
    <experiments>3</experiments>
</comment>
<comment type="interaction">
    <interactant intactId="EBI-13059134">
        <id>Q13520</id>
    </interactant>
    <interactant intactId="EBI-11037868">
        <id>P35613-2</id>
        <label>BSG</label>
    </interactant>
    <organismsDiffer>false</organismsDiffer>
    <experiments>3</experiments>
</comment>
<comment type="interaction">
    <interactant intactId="EBI-13059134">
        <id>Q13520</id>
    </interactant>
    <interactant intactId="EBI-8648738">
        <id>Q8WVV5</id>
        <label>BTN2A2</label>
    </interactant>
    <organismsDiffer>false</organismsDiffer>
    <experiments>3</experiments>
</comment>
<comment type="interaction">
    <interactant intactId="EBI-13059134">
        <id>Q13520</id>
    </interactant>
    <interactant intactId="EBI-12822627">
        <id>O14523</id>
        <label>C2CD2L</label>
    </interactant>
    <organismsDiffer>false</organismsDiffer>
    <experiments>3</experiments>
</comment>
<comment type="interaction">
    <interactant intactId="EBI-13059134">
        <id>Q13520</id>
    </interactant>
    <interactant intactId="EBI-12003442">
        <id>Q8WVX3-2</id>
        <label>C4orf3</label>
    </interactant>
    <organismsDiffer>false</organismsDiffer>
    <experiments>3</experiments>
</comment>
<comment type="interaction">
    <interactant intactId="EBI-13059134">
        <id>Q13520</id>
    </interactant>
    <interactant intactId="EBI-8558308">
        <id>P01031</id>
        <label>C5</label>
    </interactant>
    <organismsDiffer>false</organismsDiffer>
    <experiments>3</experiments>
</comment>
<comment type="interaction">
    <interactant intactId="EBI-13059134">
        <id>Q13520</id>
    </interactant>
    <interactant intactId="EBI-11986083">
        <id>Q6UWT4</id>
        <label>C5orf46</label>
    </interactant>
    <organismsDiffer>false</organismsDiffer>
    <experiments>3</experiments>
</comment>
<comment type="interaction">
    <interactant intactId="EBI-13059134">
        <id>Q13520</id>
    </interactant>
    <interactant intactId="EBI-9083477">
        <id>Q9P0B6</id>
        <label>CCDC167</label>
    </interactant>
    <organismsDiffer>false</organismsDiffer>
    <experiments>3</experiments>
</comment>
<comment type="interaction">
    <interactant intactId="EBI-13059134">
        <id>Q13520</id>
    </interactant>
    <interactant intactId="EBI-3907871">
        <id>O00626</id>
        <label>CCL22</label>
    </interactant>
    <organismsDiffer>false</organismsDiffer>
    <experiments>3</experiments>
</comment>
<comment type="interaction">
    <interactant intactId="EBI-13059134">
        <id>Q13520</id>
    </interactant>
    <interactant intactId="EBI-10271156">
        <id>Q8NHW4</id>
        <label>CCL4L2</label>
    </interactant>
    <organismsDiffer>false</organismsDiffer>
    <experiments>3</experiments>
</comment>
<comment type="interaction">
    <interactant intactId="EBI-13059134">
        <id>Q13520</id>
    </interactant>
    <interactant intactId="EBI-2826276">
        <id>P34810</id>
        <label>CD68</label>
    </interactant>
    <organismsDiffer>false</organismsDiffer>
    <experiments>3</experiments>
</comment>
<comment type="interaction">
    <interactant intactId="EBI-13059134">
        <id>Q13520</id>
    </interactant>
    <interactant intactId="EBI-712921">
        <id>P60033</id>
        <label>CD81</label>
    </interactant>
    <organismsDiffer>false</organismsDiffer>
    <experiments>3</experiments>
</comment>
<comment type="interaction">
    <interactant intactId="EBI-13059134">
        <id>Q13520</id>
    </interactant>
    <interactant intactId="EBI-358858">
        <id>O14735</id>
        <label>CDIPT</label>
    </interactant>
    <organismsDiffer>false</organismsDiffer>
    <experiments>3</experiments>
</comment>
<comment type="interaction">
    <interactant intactId="EBI-13059134">
        <id>Q13520</id>
    </interactant>
    <interactant intactId="EBI-12011352">
        <id>Q6IBD0</id>
        <label>CDW52</label>
    </interactant>
    <organismsDiffer>false</organismsDiffer>
    <experiments>3</experiments>
</comment>
<comment type="interaction">
    <interactant intactId="EBI-13059134">
        <id>Q13520</id>
    </interactant>
    <interactant intactId="EBI-18505892">
        <id>Q99674</id>
        <label>CGREF1</label>
    </interactant>
    <organismsDiffer>false</organismsDiffer>
    <experiments>3</experiments>
</comment>
<comment type="interaction">
    <interactant intactId="EBI-13059134">
        <id>Q13520</id>
    </interactant>
    <interactant intactId="EBI-12256978">
        <id>Q8N6F1-2</id>
        <label>CLDN19</label>
    </interactant>
    <organismsDiffer>false</organismsDiffer>
    <experiments>3</experiments>
</comment>
<comment type="interaction">
    <interactant intactId="EBI-13059134">
        <id>Q13520</id>
    </interactant>
    <interactant intactId="EBI-9316372">
        <id>O14493</id>
        <label>CLDN4</label>
    </interactant>
    <organismsDiffer>false</organismsDiffer>
    <experiments>3</experiments>
</comment>
<comment type="interaction">
    <interactant intactId="EBI-13059134">
        <id>Q13520</id>
    </interactant>
    <interactant intactId="EBI-11959453">
        <id>Q8NHS1</id>
        <label>CLDND2</label>
    </interactant>
    <organismsDiffer>false</organismsDiffer>
    <experiments>3</experiments>
</comment>
<comment type="interaction">
    <interactant intactId="EBI-13059134">
        <id>Q13520</id>
    </interactant>
    <interactant intactId="EBI-7247651">
        <id>Q96MX0</id>
        <label>CMTM3</label>
    </interactant>
    <organismsDiffer>false</organismsDiffer>
    <experiments>3</experiments>
</comment>
<comment type="interaction">
    <interactant intactId="EBI-13059134">
        <id>Q13520</id>
    </interactant>
    <interactant intactId="EBI-11522780">
        <id>Q96DZ9-2</id>
        <label>CMTM5</label>
    </interactant>
    <organismsDiffer>false</organismsDiffer>
    <experiments>3</experiments>
</comment>
<comment type="interaction">
    <interactant intactId="EBI-13059134">
        <id>Q13520</id>
    </interactant>
    <interactant intactId="EBI-2807956">
        <id>Q96FZ5</id>
        <label>CMTM7</label>
    </interactant>
    <organismsDiffer>false</organismsDiffer>
    <experiments>3</experiments>
</comment>
<comment type="interaction">
    <interactant intactId="EBI-13059134">
        <id>Q13520</id>
    </interactant>
    <interactant intactId="EBI-12172273">
        <id>O95406</id>
        <label>CNIH1</label>
    </interactant>
    <organismsDiffer>false</organismsDiffer>
    <experiments>3</experiments>
</comment>
<comment type="interaction">
    <interactant intactId="EBI-13059134">
        <id>Q13520</id>
    </interactant>
    <interactant intactId="EBI-12208021">
        <id>Q8TBE1</id>
        <label>CNIH3</label>
    </interactant>
    <organismsDiffer>false</organismsDiffer>
    <experiments>3</experiments>
</comment>
<comment type="interaction">
    <interactant intactId="EBI-13059134">
        <id>Q13520</id>
    </interactant>
    <interactant intactId="EBI-17876114">
        <id>Q9Y5Q5</id>
        <label>CORIN</label>
    </interactant>
    <organismsDiffer>false</organismsDiffer>
    <experiments>3</experiments>
</comment>
<comment type="interaction">
    <interactant intactId="EBI-13059134">
        <id>Q13520</id>
    </interactant>
    <interactant intactId="EBI-2834035">
        <id>Q5RI15</id>
        <label>COX20</label>
    </interactant>
    <organismsDiffer>false</organismsDiffer>
    <experiments>3</experiments>
</comment>
<comment type="interaction">
    <interactant intactId="EBI-13059134">
        <id>Q13520</id>
    </interactant>
    <interactant intactId="EBI-12019274">
        <id>Q4LDR2</id>
        <label>CTXN3</label>
    </interactant>
    <organismsDiffer>false</organismsDiffer>
    <experiments>3</experiments>
</comment>
<comment type="interaction">
    <interactant intactId="EBI-13059134">
        <id>Q13520</id>
    </interactant>
    <interactant intactId="EBI-3911467">
        <id>Q07325</id>
        <label>CXCL9</label>
    </interactant>
    <organismsDiffer>false</organismsDiffer>
    <experiments>3</experiments>
</comment>
<comment type="interaction">
    <interactant intactId="EBI-13059134">
        <id>Q13520</id>
    </interactant>
    <interactant intactId="EBI-12823659">
        <id>Q5JRM2</id>
        <label>CXorf66</label>
    </interactant>
    <organismsDiffer>false</organismsDiffer>
    <experiments>3</experiments>
</comment>
<comment type="interaction">
    <interactant intactId="EBI-13059134">
        <id>Q13520</id>
    </interactant>
    <interactant intactId="EBI-8646596">
        <id>P49447</id>
        <label>CYB561</label>
    </interactant>
    <organismsDiffer>false</organismsDiffer>
    <experiments>3</experiments>
</comment>
<comment type="interaction">
    <interactant intactId="EBI-13059134">
        <id>Q13520</id>
    </interactant>
    <interactant intactId="EBI-10269179">
        <id>Q8NBI2</id>
        <label>CYB561A3</label>
    </interactant>
    <organismsDiffer>false</organismsDiffer>
    <experiments>3</experiments>
</comment>
<comment type="interaction">
    <interactant intactId="EBI-13059134">
        <id>Q13520</id>
    </interactant>
    <interactant intactId="EBI-12873482">
        <id>Q8N8Q1</id>
        <label>CYB561D1</label>
    </interactant>
    <organismsDiffer>false</organismsDiffer>
    <experiments>3</experiments>
</comment>
<comment type="interaction">
    <interactant intactId="EBI-13059134">
        <id>Q13520</id>
    </interactant>
    <interactant intactId="EBI-1058710">
        <id>O43169</id>
        <label>CYB5B</label>
    </interactant>
    <organismsDiffer>false</organismsDiffer>
    <experiments>3</experiments>
</comment>
<comment type="interaction">
    <interactant intactId="EBI-13059134">
        <id>Q13520</id>
    </interactant>
    <interactant intactId="EBI-1046040">
        <id>P00387</id>
        <label>CYB5R3</label>
    </interactant>
    <organismsDiffer>false</organismsDiffer>
    <experiments>3</experiments>
</comment>
<comment type="interaction">
    <interactant intactId="EBI-13059134">
        <id>Q13520</id>
    </interactant>
    <interactant intactId="EBI-2680384">
        <id>Q9BQA9</id>
        <label>CYBC1</label>
    </interactant>
    <organismsDiffer>false</organismsDiffer>
    <experiments>3</experiments>
</comment>
<comment type="interaction">
    <interactant intactId="EBI-13059134">
        <id>Q13520</id>
    </interactant>
    <interactant intactId="EBI-1752413">
        <id>P78329</id>
        <label>CYP4F2</label>
    </interactant>
    <organismsDiffer>false</organismsDiffer>
    <experiments>3</experiments>
</comment>
<comment type="interaction">
    <interactant intactId="EBI-13059134">
        <id>Q13520</id>
    </interactant>
    <interactant intactId="EBI-17509525">
        <id>Q6NT55</id>
        <label>CYP4F22</label>
    </interactant>
    <organismsDiffer>false</organismsDiffer>
    <experiments>3</experiments>
</comment>
<comment type="interaction">
    <interactant intactId="EBI-13059134">
        <id>Q13520</id>
    </interactant>
    <interactant intactId="EBI-12074168">
        <id>P81534</id>
        <label>DEFB103B</label>
    </interactant>
    <organismsDiffer>false</organismsDiffer>
    <experiments>3</experiments>
</comment>
<comment type="interaction">
    <interactant intactId="EBI-13059134">
        <id>Q13520</id>
    </interactant>
    <interactant intactId="EBI-13346443">
        <id>Q8NET1</id>
        <label>DEFB108B</label>
    </interactant>
    <organismsDiffer>false</organismsDiffer>
    <experiments>3</experiments>
</comment>
<comment type="interaction">
    <interactant intactId="EBI-13059134">
        <id>Q13520</id>
    </interactant>
    <interactant intactId="EBI-10305240">
        <id>Q9H1M4</id>
        <label>DEFB127</label>
    </interactant>
    <organismsDiffer>false</organismsDiffer>
    <experiments>3</experiments>
</comment>
<comment type="interaction">
    <interactant intactId="EBI-13059134">
        <id>Q13520</id>
    </interactant>
    <interactant intactId="EBI-398977">
        <id>Q9BUN8</id>
        <label>DERL1</label>
    </interactant>
    <organismsDiffer>false</organismsDiffer>
    <experiments>3</experiments>
</comment>
<comment type="interaction">
    <interactant intactId="EBI-13059134">
        <id>Q13520</id>
    </interactant>
    <interactant intactId="EBI-12831978">
        <id>Q6ZPD8</id>
        <label>DGAT2L6</label>
    </interactant>
    <organismsDiffer>false</organismsDiffer>
    <experiments>3</experiments>
</comment>
<comment type="interaction">
    <interactant intactId="EBI-13059134">
        <id>Q13520</id>
    </interactant>
    <interactant intactId="EBI-3923585">
        <id>Q8N5I4</id>
        <label>DHRSX</label>
    </interactant>
    <organismsDiffer>false</organismsDiffer>
    <experiments>3</experiments>
</comment>
<comment type="interaction">
    <interactant intactId="EBI-13059134">
        <id>Q13520</id>
    </interactant>
    <interactant intactId="EBI-8639143">
        <id>Q96LL9</id>
        <label>DNAJC30</label>
    </interactant>
    <organismsDiffer>false</organismsDiffer>
    <experiments>3</experiments>
</comment>
<comment type="interaction">
    <interactant intactId="EBI-13059134">
        <id>Q13520</id>
    </interactant>
    <interactant intactId="EBI-3915253">
        <id>Q15125</id>
        <label>EBP</label>
    </interactant>
    <organismsDiffer>false</organismsDiffer>
    <experiments>3</experiments>
</comment>
<comment type="interaction">
    <interactant intactId="EBI-13059134">
        <id>Q13520</id>
    </interactant>
    <interactant intactId="EBI-1753674">
        <id>P52803</id>
        <label>EFNA5</label>
    </interactant>
    <organismsDiffer>false</organismsDiffer>
    <experiments>3</experiments>
</comment>
<comment type="interaction">
    <interactant intactId="EBI-13059134">
        <id>Q13520</id>
    </interactant>
    <interactant intactId="EBI-2820492">
        <id>Q9BV81</id>
        <label>EMC6</label>
    </interactant>
    <organismsDiffer>false</organismsDiffer>
    <experiments>3</experiments>
</comment>
<comment type="interaction">
    <interactant intactId="EBI-13059134">
        <id>Q13520</id>
    </interactant>
    <interactant intactId="EBI-4319440">
        <id>P54849</id>
        <label>EMP1</label>
    </interactant>
    <organismsDiffer>false</organismsDiffer>
    <experiments>3</experiments>
</comment>
<comment type="interaction">
    <interactant intactId="EBI-13059134">
        <id>Q13520</id>
    </interactant>
    <interactant intactId="EBI-3907816">
        <id>P54852</id>
        <label>EMP3</label>
    </interactant>
    <organismsDiffer>false</organismsDiffer>
    <experiments>3</experiments>
</comment>
<comment type="interaction">
    <interactant intactId="EBI-13059134">
        <id>Q13520</id>
    </interactant>
    <interactant intactId="EBI-711490">
        <id>Q9UKR5</id>
        <label>ERG28</label>
    </interactant>
    <organismsDiffer>false</organismsDiffer>
    <experiments>3</experiments>
</comment>
<comment type="interaction">
    <interactant intactId="EBI-13059134">
        <id>Q13520</id>
    </interactant>
    <interactant intactId="EBI-10976398">
        <id>Q7Z2K6</id>
        <label>ERMP1</label>
    </interactant>
    <organismsDiffer>false</organismsDiffer>
    <experiments>3</experiments>
</comment>
<comment type="interaction">
    <interactant intactId="EBI-13059134">
        <id>Q13520</id>
    </interactant>
    <interactant intactId="EBI-11337888">
        <id>Q7L5A8</id>
        <label>FA2H</label>
    </interactant>
    <organismsDiffer>false</organismsDiffer>
    <experiments>3</experiments>
</comment>
<comment type="interaction">
    <interactant intactId="EBI-13059134">
        <id>Q13520</id>
    </interactant>
    <interactant intactId="EBI-12201693">
        <id>Q8N128-2</id>
        <label>FAM177A1</label>
    </interactant>
    <organismsDiffer>false</organismsDiffer>
    <experiments>3</experiments>
</comment>
<comment type="interaction">
    <interactant intactId="EBI-13059134">
        <id>Q13520</id>
    </interactant>
    <interactant intactId="EBI-12142299">
        <id>Q96IV6</id>
        <label>FAXDC2</label>
    </interactant>
    <organismsDiffer>false</organismsDiffer>
    <experiments>3</experiments>
</comment>
<comment type="interaction">
    <interactant intactId="EBI-13059134">
        <id>Q13520</id>
    </interactant>
    <interactant intactId="EBI-714550">
        <id>P37268</id>
        <label>FDFT1</label>
    </interactant>
    <organismsDiffer>false</organismsDiffer>
    <experiments>3</experiments>
</comment>
<comment type="interaction">
    <interactant intactId="EBI-13059134">
        <id>Q13520</id>
    </interactant>
    <interactant intactId="EBI-714482">
        <id>Q9BWH2</id>
        <label>FUNDC2</label>
    </interactant>
    <organismsDiffer>false</organismsDiffer>
    <experiments>3</experiments>
</comment>
<comment type="interaction">
    <interactant intactId="EBI-13059134">
        <id>Q13520</id>
    </interactant>
    <interactant intactId="EBI-12175685">
        <id>Q14802-3</id>
        <label>FXYD3</label>
    </interactant>
    <organismsDiffer>false</organismsDiffer>
    <experiments>3</experiments>
</comment>
<comment type="interaction">
    <interactant intactId="EBI-13059134">
        <id>Q13520</id>
    </interactant>
    <interactant intactId="EBI-713304">
        <id>Q9H0Q3</id>
        <label>FXYD6</label>
    </interactant>
    <organismsDiffer>false</organismsDiffer>
    <experiments>3</experiments>
</comment>
<comment type="interaction">
    <interactant intactId="EBI-13059134">
        <id>Q13520</id>
    </interactant>
    <interactant intactId="EBI-3436637">
        <id>P01350</id>
        <label>GAST</label>
    </interactant>
    <organismsDiffer>false</organismsDiffer>
    <experiments>3</experiments>
</comment>
<comment type="interaction">
    <interactant intactId="EBI-13059134">
        <id>Q13520</id>
    </interactant>
    <interactant intactId="EBI-11991950">
        <id>Q8WWP7</id>
        <label>GIMAP1</label>
    </interactant>
    <organismsDiffer>false</organismsDiffer>
    <experiments>3</experiments>
</comment>
<comment type="interaction">
    <interactant intactId="EBI-13059134">
        <id>Q13520</id>
    </interactant>
    <interactant intactId="EBI-6166686">
        <id>Q96F15</id>
        <label>GIMAP5</label>
    </interactant>
    <organismsDiffer>false</organismsDiffer>
    <experiments>3</experiments>
</comment>
<comment type="interaction">
    <interactant intactId="EBI-13059134">
        <id>Q13520</id>
    </interactant>
    <interactant intactId="EBI-3905204">
        <id>P29033</id>
        <label>GJB2</label>
    </interactant>
    <organismsDiffer>false</organismsDiffer>
    <experiments>3</experiments>
</comment>
<comment type="interaction">
    <interactant intactId="EBI-13059134">
        <id>Q13520</id>
    </interactant>
    <interactant intactId="EBI-3933251">
        <id>Q9NS71</id>
        <label>GKN1</label>
    </interactant>
    <organismsDiffer>false</organismsDiffer>
    <experiments>3</experiments>
</comment>
<comment type="interaction">
    <interactant intactId="EBI-13059134">
        <id>Q13520</id>
    </interactant>
    <interactant intactId="EBI-17231387">
        <id>Q6ZVE7</id>
        <label>GOLT1A</label>
    </interactant>
    <organismsDiffer>false</organismsDiffer>
    <experiments>3</experiments>
</comment>
<comment type="interaction">
    <interactant intactId="EBI-13059134">
        <id>Q13520</id>
    </interactant>
    <interactant intactId="EBI-4401517">
        <id>O14653</id>
        <label>GOSR2</label>
    </interactant>
    <organismsDiffer>false</organismsDiffer>
    <experiments>3</experiments>
</comment>
<comment type="interaction">
    <interactant intactId="EBI-13059134">
        <id>Q13520</id>
    </interactant>
    <interactant intactId="EBI-11955647">
        <id>Q8TDV0</id>
        <label>GPR151</label>
    </interactant>
    <organismsDiffer>false</organismsDiffer>
    <experiments>3</experiments>
</comment>
<comment type="interaction">
    <interactant intactId="EBI-13059134">
        <id>Q13520</id>
    </interactant>
    <interactant intactId="EBI-13345167">
        <id>Q8TDT2</id>
        <label>GPR152</label>
    </interactant>
    <organismsDiffer>false</organismsDiffer>
    <experiments>3</experiments>
</comment>
<comment type="interaction">
    <interactant intactId="EBI-13059134">
        <id>Q13520</id>
    </interactant>
    <interactant intactId="EBI-10178951">
        <id>O00155</id>
        <label>GPR25</label>
    </interactant>
    <organismsDiffer>false</organismsDiffer>
    <experiments>3</experiments>
</comment>
<comment type="interaction">
    <interactant intactId="EBI-13059134">
        <id>Q13520</id>
    </interactant>
    <interactant intactId="EBI-10232876">
        <id>Q14416</id>
        <label>GRM2</label>
    </interactant>
    <organismsDiffer>false</organismsDiffer>
    <experiments>3</experiments>
</comment>
<comment type="interaction">
    <interactant intactId="EBI-13059134">
        <id>Q13520</id>
    </interactant>
    <interactant intactId="EBI-7797098">
        <id>P04921</id>
        <label>GYPC</label>
    </interactant>
    <organismsDiffer>false</organismsDiffer>
    <experiments>3</experiments>
</comment>
<comment type="interaction">
    <interactant intactId="EBI-13059134">
        <id>Q13520</id>
    </interactant>
    <interactant intactId="EBI-2806151">
        <id>P09601</id>
        <label>HMOX1</label>
    </interactant>
    <organismsDiffer>false</organismsDiffer>
    <experiments>3</experiments>
</comment>
<comment type="interaction">
    <interactant intactId="EBI-13059134">
        <id>Q13520</id>
    </interactant>
    <interactant intactId="EBI-712096">
        <id>P30519</id>
        <label>HMOX2</label>
    </interactant>
    <organismsDiffer>false</organismsDiffer>
    <experiments>3</experiments>
</comment>
<comment type="interaction">
    <interactant intactId="EBI-13059134">
        <id>Q13520</id>
    </interactant>
    <interactant intactId="EBI-17426018">
        <id>P14060</id>
        <label>HSD3B1</label>
    </interactant>
    <organismsDiffer>false</organismsDiffer>
    <experiments>3</experiments>
</comment>
<comment type="interaction">
    <interactant intactId="EBI-13059134">
        <id>Q13520</id>
    </interactant>
    <interactant intactId="EBI-12937691">
        <id>Q9BUP3-3</id>
        <label>HTATIP2</label>
    </interactant>
    <organismsDiffer>false</organismsDiffer>
    <experiments>3</experiments>
</comment>
<comment type="interaction">
    <interactant intactId="EBI-13059134">
        <id>Q13520</id>
    </interactant>
    <interactant intactId="EBI-11721771">
        <id>O60725</id>
        <label>ICMT</label>
    </interactant>
    <organismsDiffer>false</organismsDiffer>
    <experiments>3</experiments>
</comment>
<comment type="interaction">
    <interactant intactId="EBI-13059134">
        <id>Q13520</id>
    </interactant>
    <interactant intactId="EBI-7932862">
        <id>Q01628</id>
        <label>IFITM3</label>
    </interactant>
    <organismsDiffer>false</organismsDiffer>
    <experiments>3</experiments>
</comment>
<comment type="interaction">
    <interactant intactId="EBI-13059134">
        <id>Q13520</id>
    </interactant>
    <interactant intactId="EBI-1030755">
        <id>P15260</id>
        <label>IFNGR1</label>
    </interactant>
    <organismsDiffer>false</organismsDiffer>
    <experiments>3</experiments>
</comment>
<comment type="interaction">
    <interactant intactId="EBI-13059134">
        <id>Q13520</id>
    </interactant>
    <interactant intactId="EBI-720480">
        <id>P24593</id>
        <label>IGFBP5</label>
    </interactant>
    <organismsDiffer>false</organismsDiffer>
    <experiments>3</experiments>
</comment>
<comment type="interaction">
    <interactant intactId="EBI-13059134">
        <id>Q13520</id>
    </interactant>
    <interactant intactId="EBI-6252425">
        <id>O15503</id>
        <label>INSIG1</label>
    </interactant>
    <organismsDiffer>false</organismsDiffer>
    <experiments>3</experiments>
</comment>
<comment type="interaction">
    <interactant intactId="EBI-13059134">
        <id>Q13520</id>
    </interactant>
    <interactant intactId="EBI-8503746">
        <id>Q9Y5U4</id>
        <label>INSIG2</label>
    </interactant>
    <organismsDiffer>false</organismsDiffer>
    <experiments>3</experiments>
</comment>
<comment type="interaction">
    <interactant intactId="EBI-13059134">
        <id>Q13520</id>
    </interactant>
    <interactant intactId="EBI-2568251">
        <id>P11215</id>
        <label>ITGAM</label>
    </interactant>
    <organismsDiffer>false</organismsDiffer>
    <experiments>3</experiments>
</comment>
<comment type="interaction">
    <interactant intactId="EBI-13059134">
        <id>Q13520</id>
    </interactant>
    <interactant intactId="EBI-10266796">
        <id>Q8N5M9</id>
        <label>JAGN1</label>
    </interactant>
    <organismsDiffer>false</organismsDiffer>
    <experiments>3</experiments>
</comment>
<comment type="interaction">
    <interactant intactId="EBI-13059134">
        <id>Q13520</id>
    </interactant>
    <interactant intactId="EBI-465137">
        <id>Q9HDC5</id>
        <label>JPH1</label>
    </interactant>
    <organismsDiffer>false</organismsDiffer>
    <experiments>3</experiments>
</comment>
<comment type="interaction">
    <interactant intactId="EBI-13059134">
        <id>Q13520</id>
    </interactant>
    <interactant intactId="EBI-3914675">
        <id>O00180</id>
        <label>KCNK1</label>
    </interactant>
    <organismsDiffer>false</organismsDiffer>
    <experiments>3</experiments>
</comment>
<comment type="interaction">
    <interactant intactId="EBI-13059134">
        <id>Q13520</id>
    </interactant>
    <interactant intactId="EBI-12268900">
        <id>Q68G75</id>
        <label>LEMD1</label>
    </interactant>
    <organismsDiffer>false</organismsDiffer>
    <experiments>3</experiments>
</comment>
<comment type="interaction">
    <interactant intactId="EBI-13059134">
        <id>Q13520</id>
    </interactant>
    <interactant intactId="EBI-15672507">
        <id>O15243</id>
        <label>LEPROT</label>
    </interactant>
    <organismsDiffer>false</organismsDiffer>
    <experiments>3</experiments>
</comment>
<comment type="interaction">
    <interactant intactId="EBI-13059134">
        <id>Q13520</id>
    </interactant>
    <interactant intactId="EBI-2820517">
        <id>Q8TAF8</id>
        <label>LHFPL5</label>
    </interactant>
    <organismsDiffer>false</organismsDiffer>
    <experiments>3</experiments>
</comment>
<comment type="interaction">
    <interactant intactId="EBI-13059134">
        <id>Q13520</id>
    </interactant>
    <interactant intactId="EBI-12133176">
        <id>Q9UIQ6-2</id>
        <label>LNPEP</label>
    </interactant>
    <organismsDiffer>false</organismsDiffer>
    <experiments>3</experiments>
</comment>
<comment type="interaction">
    <interactant intactId="EBI-13059134">
        <id>Q13520</id>
    </interactant>
    <interactant intactId="EBI-12033434">
        <id>Q9UBY5</id>
        <label>LPAR3</label>
    </interactant>
    <organismsDiffer>false</organismsDiffer>
    <experiments>3</experiments>
</comment>
<comment type="interaction">
    <interactant intactId="EBI-13059134">
        <id>Q13520</id>
    </interactant>
    <interactant intactId="EBI-3930711">
        <id>P48449</id>
        <label>LSS</label>
    </interactant>
    <organismsDiffer>false</organismsDiffer>
    <experiments>3</experiments>
</comment>
<comment type="interaction">
    <interactant intactId="EBI-13059134">
        <id>Q13520</id>
    </interactant>
    <interactant intactId="EBI-1965225">
        <id>Q14210</id>
        <label>LY6D</label>
    </interactant>
    <organismsDiffer>false</organismsDiffer>
    <experiments>3</experiments>
</comment>
<comment type="interaction">
    <interactant intactId="EBI-13059134">
        <id>Q13520</id>
    </interactant>
    <interactant intactId="EBI-3932027">
        <id>P21145</id>
        <label>MAL</label>
    </interactant>
    <organismsDiffer>false</organismsDiffer>
    <experiments>3</experiments>
</comment>
<comment type="interaction">
    <interactant intactId="EBI-13059134">
        <id>Q13520</id>
    </interactant>
    <interactant intactId="EBI-944295">
        <id>Q969L2</id>
        <label>MAL2</label>
    </interactant>
    <organismsDiffer>false</organismsDiffer>
    <experiments>3</experiments>
</comment>
<comment type="interaction">
    <interactant intactId="EBI-13059134">
        <id>Q13520</id>
    </interactant>
    <interactant intactId="EBI-750078">
        <id>Q13021</id>
        <label>MALL</label>
    </interactant>
    <organismsDiffer>false</organismsDiffer>
    <experiments>3</experiments>
</comment>
<comment type="interaction">
    <interactant intactId="EBI-13059134">
        <id>Q13520</id>
    </interactant>
    <interactant intactId="EBI-10317612">
        <id>Q9P0N8</id>
        <label>MARCHF2</label>
    </interactant>
    <organismsDiffer>false</organismsDiffer>
    <experiments>3</experiments>
</comment>
<comment type="interaction">
    <interactant intactId="EBI-13059134">
        <id>Q13520</id>
    </interactant>
    <interactant intactId="EBI-2341610">
        <id>Q9NX47</id>
        <label>MARCHF5</label>
    </interactant>
    <organismsDiffer>false</organismsDiffer>
    <experiments>3</experiments>
</comment>
<comment type="interaction">
    <interactant intactId="EBI-13059134">
        <id>Q13520</id>
    </interactant>
    <interactant intactId="EBI-11956541">
        <id>Q9GZY8-5</id>
        <label>MFF</label>
    </interactant>
    <organismsDiffer>false</organismsDiffer>
    <experiments>3</experiments>
</comment>
<comment type="interaction">
    <interactant intactId="EBI-13059134">
        <id>Q13520</id>
    </interactant>
    <interactant intactId="EBI-745345">
        <id>Q96ES6</id>
        <label>MFSD3</label>
    </interactant>
    <organismsDiffer>false</organismsDiffer>
    <experiments>3</experiments>
</comment>
<comment type="interaction">
    <interactant intactId="EBI-13059134">
        <id>Q13520</id>
    </interactant>
    <interactant intactId="EBI-3920969">
        <id>Q6N075</id>
        <label>MFSD5</label>
    </interactant>
    <organismsDiffer>false</organismsDiffer>
    <experiments>3</experiments>
</comment>
<comment type="interaction">
    <interactant intactId="EBI-13059134">
        <id>Q13520</id>
    </interactant>
    <interactant intactId="EBI-2829774">
        <id>O43451</id>
        <label>MGAM</label>
    </interactant>
    <organismsDiffer>false</organismsDiffer>
    <experiments>3</experiments>
</comment>
<comment type="interaction">
    <interactant intactId="EBI-13059134">
        <id>Q13520</id>
    </interactant>
    <interactant intactId="EBI-12866138">
        <id>A0A0C4DFN3</id>
        <label>MGLL</label>
    </interactant>
    <organismsDiffer>false</organismsDiffer>
    <experiments>3</experiments>
</comment>
<comment type="interaction">
    <interactant intactId="EBI-13059134">
        <id>Q13520</id>
    </interactant>
    <interactant intactId="EBI-992788">
        <id>P50281</id>
        <label>MMP14</label>
    </interactant>
    <organismsDiffer>false</organismsDiffer>
    <experiments>3</experiments>
</comment>
<comment type="interaction">
    <interactant intactId="EBI-13059134">
        <id>Q13520</id>
    </interactant>
    <interactant intactId="EBI-2808234">
        <id>P11836</id>
        <label>MS4A1</label>
    </interactant>
    <organismsDiffer>false</organismsDiffer>
    <experiments>3</experiments>
</comment>
<comment type="interaction">
    <interactant intactId="EBI-13059134">
        <id>Q13520</id>
    </interactant>
    <interactant intactId="EBI-12070086">
        <id>Q5J8X5</id>
        <label>MS4A13</label>
    </interactant>
    <organismsDiffer>false</organismsDiffer>
    <experiments>3</experiments>
</comment>
<comment type="interaction">
    <interactant intactId="EBI-13059134">
        <id>Q13520</id>
    </interactant>
    <interactant intactId="EBI-17641390">
        <id>A6NDP7</id>
        <label>MYADML2</label>
    </interactant>
    <organismsDiffer>false</organismsDiffer>
    <experiments>3</experiments>
</comment>
<comment type="interaction">
    <interactant intactId="EBI-13059134">
        <id>Q13520</id>
    </interactant>
    <interactant intactId="EBI-721517">
        <id>Q99519</id>
        <label>NEU1</label>
    </interactant>
    <organismsDiffer>false</organismsDiffer>
    <experiments>3</experiments>
</comment>
<comment type="interaction">
    <interactant intactId="EBI-13059134">
        <id>Q13520</id>
    </interactant>
    <interactant intactId="EBI-2802124">
        <id>Q92982</id>
        <label>NINJ1</label>
    </interactant>
    <organismsDiffer>false</organismsDiffer>
    <experiments>3</experiments>
</comment>
<comment type="interaction">
    <interactant intactId="EBI-13059134">
        <id>Q13520</id>
    </interactant>
    <interactant intactId="EBI-10317425">
        <id>Q9NZG7</id>
        <label>NINJ2</label>
    </interactant>
    <organismsDiffer>false</organismsDiffer>
    <experiments>3</experiments>
</comment>
<comment type="interaction">
    <interactant intactId="EBI-13059134">
        <id>Q13520</id>
    </interactant>
    <interactant intactId="EBI-3919611">
        <id>Q16617</id>
        <label>NKG7</label>
    </interactant>
    <organismsDiffer>false</organismsDiffer>
    <experiments>3</experiments>
</comment>
<comment type="interaction">
    <interactant intactId="EBI-13059134">
        <id>Q13520</id>
    </interactant>
    <interactant intactId="EBI-12051377">
        <id>Q8N912</id>
        <label>NRAC</label>
    </interactant>
    <organismsDiffer>false</organismsDiffer>
    <experiments>3</experiments>
</comment>
<comment type="interaction">
    <interactant intactId="EBI-13059134">
        <id>Q13520</id>
    </interactant>
    <interactant intactId="EBI-10262547">
        <id>Q8IXM6</id>
        <label>NRM</label>
    </interactant>
    <organismsDiffer>false</organismsDiffer>
    <experiments>3</experiments>
</comment>
<comment type="interaction">
    <interactant intactId="EBI-13059134">
        <id>Q13520</id>
    </interactant>
    <interactant intactId="EBI-1054848">
        <id>Q9P0S3</id>
        <label>ORMDL1</label>
    </interactant>
    <organismsDiffer>false</organismsDiffer>
    <experiments>3</experiments>
</comment>
<comment type="interaction">
    <interactant intactId="EBI-13059134">
        <id>Q13520</id>
    </interactant>
    <interactant intactId="EBI-11075081">
        <id>Q53FV1</id>
        <label>ORMDL2</label>
    </interactant>
    <organismsDiffer>false</organismsDiffer>
    <experiments>3</experiments>
</comment>
<comment type="interaction">
    <interactant intactId="EBI-13059134">
        <id>Q13520</id>
    </interactant>
    <interactant intactId="EBI-721750">
        <id>Q8N138</id>
        <label>ORMDL3</label>
    </interactant>
    <organismsDiffer>false</organismsDiffer>
    <experiments>3</experiments>
</comment>
<comment type="interaction">
    <interactant intactId="EBI-13059134">
        <id>Q13520</id>
    </interactant>
    <interactant intactId="EBI-6916492">
        <id>Q9NUU6</id>
        <label>OTULINL</label>
    </interactant>
    <organismsDiffer>false</organismsDiffer>
    <experiments>3</experiments>
</comment>
<comment type="interaction">
    <interactant intactId="EBI-13059134">
        <id>Q13520</id>
    </interactant>
    <interactant intactId="EBI-465167">
        <id>P09466</id>
        <label>PAEP</label>
    </interactant>
    <organismsDiffer>false</organismsDiffer>
    <experiments>3</experiments>
</comment>
<comment type="interaction">
    <interactant intactId="EBI-13059134">
        <id>Q13520</id>
    </interactant>
    <interactant intactId="EBI-716063">
        <id>Q13113</id>
        <label>PDZK1IP1</label>
    </interactant>
    <organismsDiffer>false</organismsDiffer>
    <experiments>3</experiments>
</comment>
<comment type="interaction">
    <interactant intactId="EBI-13059134">
        <id>Q13520</id>
    </interactant>
    <interactant intactId="EBI-12213001">
        <id>I3L0A0</id>
        <label>PEDS1-UBE2V1</label>
    </interactant>
    <organismsDiffer>false</organismsDiffer>
    <experiments>3</experiments>
</comment>
<comment type="interaction">
    <interactant intactId="EBI-13059134">
        <id>Q13520</id>
    </interactant>
    <interactant intactId="EBI-17513590">
        <id>Q9UBM1-2</id>
        <label>PEMT</label>
    </interactant>
    <organismsDiffer>false</organismsDiffer>
    <experiments>3</experiments>
</comment>
<comment type="interaction">
    <interactant intactId="EBI-13059134">
        <id>Q13520</id>
    </interactant>
    <interactant intactId="EBI-17284886">
        <id>Q96HA9</id>
        <label>PEX11G</label>
    </interactant>
    <organismsDiffer>false</organismsDiffer>
    <experiments>3</experiments>
</comment>
<comment type="interaction">
    <interactant intactId="EBI-13059134">
        <id>Q13520</id>
    </interactant>
    <interactant intactId="EBI-981985">
        <id>Q9Y5Y5</id>
        <label>PEX16</label>
    </interactant>
    <organismsDiffer>false</organismsDiffer>
    <experiments>3</experiments>
</comment>
<comment type="interaction">
    <interactant intactId="EBI-13059134">
        <id>Q13520</id>
    </interactant>
    <interactant intactId="EBI-17180304">
        <id>Q07326</id>
        <label>PIGF</label>
    </interactant>
    <organismsDiffer>false</organismsDiffer>
    <experiments>3</experiments>
</comment>
<comment type="interaction">
    <interactant intactId="EBI-13059134">
        <id>Q13520</id>
    </interactant>
    <interactant intactId="EBI-3919291">
        <id>Q9Y342</id>
        <label>PLLP</label>
    </interactant>
    <organismsDiffer>false</organismsDiffer>
    <experiments>3</experiments>
</comment>
<comment type="interaction">
    <interactant intactId="EBI-13059134">
        <id>Q13520</id>
    </interactant>
    <interactant intactId="EBI-12188331">
        <id>P60201-2</id>
        <label>PLP1</label>
    </interactant>
    <organismsDiffer>false</organismsDiffer>
    <experiments>3</experiments>
</comment>
<comment type="interaction">
    <interactant intactId="EBI-13059134">
        <id>Q13520</id>
    </interactant>
    <interactant intactId="EBI-11721828">
        <id>Q8IY26</id>
        <label>PLPP6</label>
    </interactant>
    <organismsDiffer>false</organismsDiffer>
    <experiments>3</experiments>
</comment>
<comment type="interaction">
    <interactant intactId="EBI-13059134">
        <id>Q13520</id>
    </interactant>
    <interactant intactId="EBI-14210385">
        <id>Q59EV6</id>
        <label>PPGB</label>
    </interactant>
    <organismsDiffer>false</organismsDiffer>
    <experiments>3</experiments>
</comment>
<comment type="interaction">
    <interactant intactId="EBI-13059134">
        <id>Q13520</id>
    </interactant>
    <interactant intactId="EBI-2506064">
        <id>O60831</id>
        <label>PRAF2</label>
    </interactant>
    <organismsDiffer>false</organismsDiffer>
    <experiments>3</experiments>
</comment>
<comment type="interaction">
    <interactant intactId="EBI-13059134">
        <id>Q13520</id>
    </interactant>
    <interactant intactId="EBI-10173935">
        <id>A5D903</id>
        <label>PRB1</label>
    </interactant>
    <organismsDiffer>false</organismsDiffer>
    <experiments>3</experiments>
</comment>
<comment type="interaction">
    <interactant intactId="EBI-13059134">
        <id>Q13520</id>
    </interactant>
    <interactant intactId="EBI-722696">
        <id>Q7Z6L0</id>
        <label>PRRT2</label>
    </interactant>
    <organismsDiffer>false</organismsDiffer>
    <experiments>3</experiments>
</comment>
<comment type="interaction">
    <interactant intactId="EBI-13059134">
        <id>Q13520</id>
    </interactant>
    <interactant intactId="EBI-968788">
        <id>P18031</id>
        <label>PTPN1</label>
    </interactant>
    <organismsDiffer>false</organismsDiffer>
    <experiments>3</experiments>
</comment>
<comment type="interaction">
    <interactant intactId="EBI-13059134">
        <id>Q13520</id>
    </interactant>
    <interactant intactId="EBI-742898">
        <id>P43378</id>
        <label>PTPN9</label>
    </interactant>
    <organismsDiffer>false</organismsDiffer>
    <experiments>3</experiments>
</comment>
<comment type="interaction">
    <interactant intactId="EBI-13059134">
        <id>Q13520</id>
    </interactant>
    <interactant intactId="EBI-722247">
        <id>Q9NP72</id>
        <label>RAB18</label>
    </interactant>
    <organismsDiffer>false</organismsDiffer>
    <experiments>3</experiments>
</comment>
<comment type="interaction">
    <interactant intactId="EBI-13059134">
        <id>Q13520</id>
    </interactant>
    <interactant intactId="EBI-6269616">
        <id>Q96AA3</id>
        <label>RFT1</label>
    </interactant>
    <organismsDiffer>false</organismsDiffer>
    <experiments>3</experiments>
</comment>
<comment type="interaction">
    <interactant intactId="EBI-13059134">
        <id>Q13520</id>
    </interactant>
    <interactant intactId="EBI-17249212">
        <id>Q02161-2</id>
        <label>RHD</label>
    </interactant>
    <organismsDiffer>false</organismsDiffer>
    <experiments>3</experiments>
</comment>
<comment type="interaction">
    <interactant intactId="EBI-13059134">
        <id>Q13520</id>
    </interactant>
    <interactant intactId="EBI-1052363">
        <id>Q9NS64</id>
        <label>RPRM</label>
    </interactant>
    <organismsDiffer>false</organismsDiffer>
    <experiments>3</experiments>
</comment>
<comment type="interaction">
    <interactant intactId="EBI-13059134">
        <id>Q13520</id>
    </interactant>
    <interactant intactId="EBI-10244780">
        <id>Q5QGT7</id>
        <label>RTP2</label>
    </interactant>
    <organismsDiffer>false</organismsDiffer>
    <experiments>3</experiments>
</comment>
<comment type="interaction">
    <interactant intactId="EBI-13059134">
        <id>Q13520</id>
    </interactant>
    <interactant intactId="EBI-8636004">
        <id>Q96GQ5</id>
        <label>RUSF1</label>
    </interactant>
    <organismsDiffer>false</organismsDiffer>
    <experiments>3</experiments>
</comment>
<comment type="interaction">
    <interactant intactId="EBI-13059134">
        <id>Q13520</id>
    </interactant>
    <interactant intactId="EBI-3917235">
        <id>Q9NTJ5</id>
        <label>SACM1L</label>
    </interactant>
    <organismsDiffer>false</organismsDiffer>
    <experiments>3</experiments>
</comment>
<comment type="interaction">
    <interactant intactId="EBI-13059134">
        <id>Q13520</id>
    </interactant>
    <interactant intactId="EBI-4403649">
        <id>Q969E2</id>
        <label>SCAMP4</label>
    </interactant>
    <organismsDiffer>false</organismsDiffer>
    <experiments>3</experiments>
</comment>
<comment type="interaction">
    <interactant intactId="EBI-13059134">
        <id>Q13520</id>
    </interactant>
    <interactant intactId="EBI-2695784">
        <id>Q8TAC9</id>
        <label>SCAMP5</label>
    </interactant>
    <organismsDiffer>false</organismsDiffer>
    <experiments>3</experiments>
</comment>
<comment type="interaction">
    <interactant intactId="EBI-13059134">
        <id>Q13520</id>
    </interactant>
    <interactant intactId="EBI-2684237">
        <id>O00767</id>
        <label>SCD</label>
    </interactant>
    <organismsDiffer>false</organismsDiffer>
    <experiments>3</experiments>
</comment>
<comment type="interaction">
    <interactant intactId="EBI-13059134">
        <id>Q13520</id>
    </interactant>
    <interactant intactId="EBI-7797649">
        <id>P11684</id>
        <label>SCGB1A1</label>
    </interactant>
    <organismsDiffer>false</organismsDiffer>
    <experiments>3</experiments>
</comment>
<comment type="interaction">
    <interactant intactId="EBI-13059134">
        <id>Q13520</id>
    </interactant>
    <interactant intactId="EBI-8652744">
        <id>Q96IW7</id>
        <label>SEC22A</label>
    </interactant>
    <organismsDiffer>false</organismsDiffer>
    <experiments>3</experiments>
</comment>
<comment type="interaction">
    <interactant intactId="EBI-13059134">
        <id>Q13520</id>
    </interactant>
    <interactant intactId="EBI-1058865">
        <id>O75396</id>
        <label>SEC22B</label>
    </interactant>
    <organismsDiffer>false</organismsDiffer>
    <experiments>3</experiments>
</comment>
<comment type="interaction">
    <interactant intactId="EBI-13059134">
        <id>Q13520</id>
    </interactant>
    <interactant intactId="EBI-4402709">
        <id>P60059</id>
        <label>SEC61G</label>
    </interactant>
    <organismsDiffer>false</organismsDiffer>
    <experiments>3</experiments>
</comment>
<comment type="interaction">
    <interactant intactId="EBI-13059134">
        <id>Q13520</id>
    </interactant>
    <interactant intactId="EBI-9679163">
        <id>Q9Y6D0</id>
        <label>SELENOK</label>
    </interactant>
    <organismsDiffer>false</organismsDiffer>
    <experiments>3</experiments>
</comment>
<comment type="interaction">
    <interactant intactId="EBI-13059134">
        <id>Q13520</id>
    </interactant>
    <interactant intactId="EBI-2115181">
        <id>O75920</id>
        <label>SERF1B</label>
    </interactant>
    <organismsDiffer>false</organismsDiffer>
    <experiments>3</experiments>
</comment>
<comment type="interaction">
    <interactant intactId="EBI-13059134">
        <id>Q13520</id>
    </interactant>
    <interactant intactId="EBI-10329948">
        <id>Q9Y6X1</id>
        <label>SERP1</label>
    </interactant>
    <organismsDiffer>false</organismsDiffer>
    <experiments>3</experiments>
</comment>
<comment type="interaction">
    <interactant intactId="EBI-13059134">
        <id>Q13520</id>
    </interactant>
    <interactant intactId="EBI-749270">
        <id>Q8N6R1</id>
        <label>SERP2</label>
    </interactant>
    <organismsDiffer>false</organismsDiffer>
    <experiments>3</experiments>
</comment>
<comment type="interaction">
    <interactant intactId="EBI-13059134">
        <id>Q13520</id>
    </interactant>
    <interactant intactId="EBI-2854879">
        <id>Q6FHJ7</id>
        <label>SFRP4</label>
    </interactant>
    <organismsDiffer>false</organismsDiffer>
    <experiments>3</experiments>
</comment>
<comment type="interaction">
    <interactant intactId="EBI-13059134">
        <id>Q13520</id>
    </interactant>
    <interactant intactId="EBI-2854842">
        <id>Q8WV19</id>
        <label>SFT2D1</label>
    </interactant>
    <organismsDiffer>false</organismsDiffer>
    <experiments>3</experiments>
</comment>
<comment type="interaction">
    <interactant intactId="EBI-13059134">
        <id>Q13520</id>
    </interactant>
    <interactant intactId="EBI-4402330">
        <id>O95562</id>
        <label>SFT2D2</label>
    </interactant>
    <organismsDiffer>false</organismsDiffer>
    <experiments>3</experiments>
</comment>
<comment type="interaction">
    <interactant intactId="EBI-13059134">
        <id>Q13520</id>
    </interactant>
    <interactant intactId="EBI-355861">
        <id>Q9H9B4</id>
        <label>SFXN1</label>
    </interactant>
    <organismsDiffer>false</organismsDiffer>
    <experiments>3</experiments>
</comment>
<comment type="interaction">
    <interactant intactId="EBI-13059134">
        <id>Q13520</id>
    </interactant>
    <interactant intactId="EBI-6381136">
        <id>Q96NB2</id>
        <label>SFXN2</label>
    </interactant>
    <organismsDiffer>false</organismsDiffer>
    <experiments>3</experiments>
</comment>
<comment type="interaction">
    <interactant intactId="EBI-13059134">
        <id>Q13520</id>
    </interactant>
    <interactant intactId="EBI-1171999">
        <id>Q9BWM7</id>
        <label>SFXN3</label>
    </interactant>
    <organismsDiffer>false</organismsDiffer>
    <experiments>3</experiments>
</comment>
<comment type="interaction">
    <interactant intactId="EBI-13059134">
        <id>Q13520</id>
    </interactant>
    <interactant intactId="EBI-17274136">
        <id>Q8TD22</id>
        <label>SFXN5</label>
    </interactant>
    <organismsDiffer>false</organismsDiffer>
    <experiments>3</experiments>
</comment>
<comment type="interaction">
    <interactant intactId="EBI-13059134">
        <id>Q13520</id>
    </interactant>
    <interactant intactId="EBI-17460560">
        <id>Q6ZSM3</id>
        <label>SLC16A12</label>
    </interactant>
    <organismsDiffer>false</organismsDiffer>
    <experiments>3</experiments>
</comment>
<comment type="interaction">
    <interactant intactId="EBI-13059134">
        <id>Q13520</id>
    </interactant>
    <interactant intactId="EBI-12243266">
        <id>Q7RTY0</id>
        <label>SLC16A13</label>
    </interactant>
    <organismsDiffer>false</organismsDiffer>
    <experiments>3</experiments>
</comment>
<comment type="interaction">
    <interactant intactId="EBI-13059134">
        <id>Q13520</id>
    </interactant>
    <interactant intactId="EBI-10281975">
        <id>Q96AG3</id>
        <label>SLC25A46</label>
    </interactant>
    <organismsDiffer>false</organismsDiffer>
    <experiments>3</experiments>
</comment>
<comment type="interaction">
    <interactant intactId="EBI-13059134">
        <id>Q13520</id>
    </interactant>
    <interactant intactId="EBI-8644112">
        <id>Q9BRI3</id>
        <label>SLC30A2</label>
    </interactant>
    <organismsDiffer>false</organismsDiffer>
    <experiments>3</experiments>
</comment>
<comment type="interaction">
    <interactant intactId="EBI-13059134">
        <id>Q13520</id>
    </interactant>
    <interactant intactId="EBI-10262251">
        <id>Q8IWU4</id>
        <label>SLC30A8</label>
    </interactant>
    <organismsDiffer>false</organismsDiffer>
    <experiments>3</experiments>
</comment>
<comment type="interaction">
    <interactant intactId="EBI-13059134">
        <id>Q13520</id>
    </interactant>
    <interactant intactId="EBI-12870360">
        <id>P78382</id>
        <label>SLC35A1</label>
    </interactant>
    <organismsDiffer>false</organismsDiffer>
    <experiments>3</experiments>
</comment>
<comment type="interaction">
    <interactant intactId="EBI-13059134">
        <id>Q13520</id>
    </interactant>
    <interactant intactId="EBI-12147661">
        <id>P78383</id>
        <label>SLC35B1</label>
    </interactant>
    <organismsDiffer>false</organismsDiffer>
    <experiments>3</experiments>
</comment>
<comment type="interaction">
    <interactant intactId="EBI-13059134">
        <id>Q13520</id>
    </interactant>
    <interactant intactId="EBI-1054782">
        <id>Q8TB61</id>
        <label>SLC35B2</label>
    </interactant>
    <organismsDiffer>false</organismsDiffer>
    <experiments>3</experiments>
</comment>
<comment type="interaction">
    <interactant intactId="EBI-13059134">
        <id>Q13520</id>
    </interactant>
    <interactant intactId="EBI-10281213">
        <id>Q969S0</id>
        <label>SLC35B4</label>
    </interactant>
    <organismsDiffer>false</organismsDiffer>
    <experiments>3</experiments>
</comment>
<comment type="interaction">
    <interactant intactId="EBI-13059134">
        <id>Q13520</id>
    </interactant>
    <interactant intactId="EBI-12867720">
        <id>Q6ICL7</id>
        <label>SLC35E4</label>
    </interactant>
    <organismsDiffer>false</organismsDiffer>
    <experiments>3</experiments>
</comment>
<comment type="interaction">
    <interactant intactId="EBI-13059134">
        <id>Q13520</id>
    </interactant>
    <interactant intactId="EBI-13365456">
        <id>Q5T1Q4</id>
        <label>SLC35F1</label>
    </interactant>
    <organismsDiffer>false</organismsDiffer>
    <experiments>3</experiments>
</comment>
<comment type="interaction">
    <interactant intactId="EBI-13059134">
        <id>Q13520</id>
    </interactant>
    <interactant intactId="EBI-713484">
        <id>Q8N357</id>
        <label>SLC35F6</label>
    </interactant>
    <organismsDiffer>false</organismsDiffer>
    <experiments>3</experiments>
</comment>
<comment type="interaction">
    <interactant intactId="EBI-13059134">
        <id>Q13520</id>
    </interactant>
    <interactant intactId="EBI-727304">
        <id>Q8TBE7</id>
        <label>SLC35G2</label>
    </interactant>
    <organismsDiffer>false</organismsDiffer>
    <experiments>3</experiments>
</comment>
<comment type="interaction">
    <interactant intactId="EBI-13059134">
        <id>Q13520</id>
    </interactant>
    <interactant intactId="EBI-9978441">
        <id>Q9H2H9</id>
        <label>SLC38A1</label>
    </interactant>
    <organismsDiffer>false</organismsDiffer>
    <experiments>3</experiments>
</comment>
<comment type="interaction">
    <interactant intactId="EBI-13059134">
        <id>Q13520</id>
    </interactant>
    <interactant intactId="EBI-12898013">
        <id>Q9NP94</id>
        <label>SLC39A2</label>
    </interactant>
    <organismsDiffer>false</organismsDiffer>
    <experiments>3</experiments>
</comment>
<comment type="interaction">
    <interactant intactId="EBI-13059134">
        <id>Q13520</id>
    </interactant>
    <interactant intactId="EBI-1051105">
        <id>Q92504</id>
        <label>SLC39A7</label>
    </interactant>
    <organismsDiffer>false</organismsDiffer>
    <experiments>3</experiments>
</comment>
<comment type="interaction">
    <interactant intactId="EBI-13059134">
        <id>Q13520</id>
    </interactant>
    <interactant intactId="EBI-2823239">
        <id>Q9NUM3</id>
        <label>SLC39A9</label>
    </interactant>
    <organismsDiffer>false</organismsDiffer>
    <experiments>3</experiments>
</comment>
<comment type="interaction">
    <interactant intactId="EBI-13059134">
        <id>Q13520</id>
    </interactant>
    <interactant intactId="EBI-12266234">
        <id>Q8IVJ1</id>
        <label>SLC41A1</label>
    </interactant>
    <organismsDiffer>false</organismsDiffer>
    <experiments>3</experiments>
</comment>
<comment type="interaction">
    <interactant intactId="EBI-13059134">
        <id>Q13520</id>
    </interactant>
    <interactant intactId="EBI-10290130">
        <id>Q96JW4</id>
        <label>SLC41A2</label>
    </interactant>
    <organismsDiffer>false</organismsDiffer>
    <experiments>3</experiments>
</comment>
<comment type="interaction">
    <interactant intactId="EBI-13059134">
        <id>Q13520</id>
    </interactant>
    <interactant intactId="EBI-12904614">
        <id>Q9NWF4</id>
        <label>SLC52A1</label>
    </interactant>
    <organismsDiffer>false</organismsDiffer>
    <experiments>3</experiments>
</comment>
<comment type="interaction">
    <interactant intactId="EBI-13059134">
        <id>Q13520</id>
    </interactant>
    <interactant intactId="EBI-12889586">
        <id>Q6ZP29-3</id>
        <label>SLC66A1</label>
    </interactant>
    <organismsDiffer>false</organismsDiffer>
    <experiments>3</experiments>
</comment>
<comment type="interaction">
    <interactant intactId="EBI-13059134">
        <id>Q13520</id>
    </interactant>
    <interactant intactId="EBI-3907610">
        <id>Q8N2U9</id>
        <label>SLC66A2</label>
    </interactant>
    <organismsDiffer>false</organismsDiffer>
    <experiments>3</experiments>
</comment>
<comment type="interaction">
    <interactant intactId="EBI-13059134">
        <id>Q13520</id>
    </interactant>
    <interactant intactId="EBI-4289564">
        <id>P30825</id>
        <label>SLC7A1</label>
    </interactant>
    <organismsDiffer>false</organismsDiffer>
    <experiments>3</experiments>
</comment>
<comment type="interaction">
    <interactant intactId="EBI-13059134">
        <id>Q13520</id>
    </interactant>
    <interactant intactId="EBI-13292283">
        <id>Q9UHI5</id>
        <label>SLC7A8</label>
    </interactant>
    <organismsDiffer>false</organismsDiffer>
    <experiments>3</experiments>
</comment>
<comment type="interaction">
    <interactant intactId="EBI-13059134">
        <id>Q13520</id>
    </interactant>
    <interactant intactId="EBI-13041931">
        <id>Q9UIG8-2</id>
        <label>SLCO3A1</label>
    </interactant>
    <organismsDiffer>false</organismsDiffer>
    <experiments>3</experiments>
</comment>
<comment type="interaction">
    <interactant intactId="EBI-13059134">
        <id>Q13520</id>
    </interactant>
    <interactant intactId="EBI-10226799">
        <id>Q0VAQ4</id>
        <label>SMAGP</label>
    </interactant>
    <organismsDiffer>false</organismsDiffer>
    <experiments>3</experiments>
</comment>
<comment type="interaction">
    <interactant intactId="EBI-13059134">
        <id>Q13520</id>
    </interactant>
    <interactant intactId="EBI-8640191">
        <id>Q9NRQ5</id>
        <label>SMCO4</label>
    </interactant>
    <organismsDiffer>false</organismsDiffer>
    <experiments>3</experiments>
</comment>
<comment type="interaction">
    <interactant intactId="EBI-13059134">
        <id>Q13520</id>
    </interactant>
    <interactant intactId="EBI-12188413">
        <id>B2RUZ4</id>
        <label>SMIM1</label>
    </interactant>
    <organismsDiffer>false</organismsDiffer>
    <experiments>3</experiments>
</comment>
<comment type="interaction">
    <interactant intactId="EBI-13059134">
        <id>Q13520</id>
    </interactant>
    <interactant intactId="EBI-11957067">
        <id>Q6UX34</id>
        <label>SNORC</label>
    </interactant>
    <organismsDiffer>false</organismsDiffer>
    <experiments>3</experiments>
</comment>
<comment type="interaction">
    <interactant intactId="EBI-13059134">
        <id>Q13520</id>
    </interactant>
    <interactant intactId="EBI-12908338">
        <id>Q96JF0-2</id>
        <label>ST6GAL2</label>
    </interactant>
    <organismsDiffer>false</organismsDiffer>
    <experiments>3</experiments>
</comment>
<comment type="interaction">
    <interactant intactId="EBI-13059134">
        <id>Q13520</id>
    </interactant>
    <interactant intactId="EBI-9819324">
        <id>Q14849</id>
        <label>STARD3</label>
    </interactant>
    <organismsDiffer>false</organismsDiffer>
    <experiments>3</experiments>
</comment>
<comment type="interaction">
    <interactant intactId="EBI-13059134">
        <id>Q13520</id>
    </interactant>
    <interactant intactId="EBI-738687">
        <id>P02808</id>
        <label>STATH</label>
    </interactant>
    <organismsDiffer>false</organismsDiffer>
    <experiments>3</experiments>
</comment>
<comment type="interaction">
    <interactant intactId="EBI-13059134">
        <id>Q13520</id>
    </interactant>
    <interactant intactId="EBI-12200293">
        <id>P0DN84</id>
        <label>STRIT1</label>
    </interactant>
    <organismsDiffer>false</organismsDiffer>
    <experiments>3</experiments>
</comment>
<comment type="interaction">
    <interactant intactId="EBI-13059134">
        <id>Q13520</id>
    </interactant>
    <interactant intactId="EBI-2691717">
        <id>Q86Y82</id>
        <label>STX12</label>
    </interactant>
    <organismsDiffer>false</organismsDiffer>
    <experiments>3</experiments>
</comment>
<comment type="interaction">
    <interactant intactId="EBI-13059134">
        <id>Q13520</id>
    </interactant>
    <interactant intactId="EBI-9071709">
        <id>P61266</id>
        <label>STX1B</label>
    </interactant>
    <organismsDiffer>false</organismsDiffer>
    <experiments>3</experiments>
</comment>
<comment type="interaction">
    <interactant intactId="EBI-13059134">
        <id>Q13520</id>
    </interactant>
    <interactant intactId="EBI-1394295">
        <id>Q13277</id>
        <label>STX3</label>
    </interactant>
    <organismsDiffer>false</organismsDiffer>
    <experiments>3</experiments>
</comment>
<comment type="interaction">
    <interactant intactId="EBI-13059134">
        <id>Q13520</id>
    </interactant>
    <interactant intactId="EBI-714206">
        <id>Q13190</id>
        <label>STX5</label>
    </interactant>
    <organismsDiffer>false</organismsDiffer>
    <experiments>3</experiments>
</comment>
<comment type="interaction">
    <interactant intactId="EBI-13059134">
        <id>Q13520</id>
    </interactant>
    <interactant intactId="EBI-2695795">
        <id>O43752</id>
        <label>STX6</label>
    </interactant>
    <organismsDiffer>false</organismsDiffer>
    <experiments>3</experiments>
</comment>
<comment type="interaction">
    <interactant intactId="EBI-13059134">
        <id>Q13520</id>
    </interactant>
    <interactant intactId="EBI-3221827">
        <id>O15400</id>
        <label>STX7</label>
    </interactant>
    <organismsDiffer>false</organismsDiffer>
    <experiments>3</experiments>
</comment>
<comment type="interaction">
    <interactant intactId="EBI-13059134">
        <id>Q13520</id>
    </interactant>
    <interactant intactId="EBI-726331">
        <id>Q9H7V2</id>
        <label>SYNDIG1</label>
    </interactant>
    <organismsDiffer>false</organismsDiffer>
    <experiments>3</experiments>
</comment>
<comment type="interaction">
    <interactant intactId="EBI-13059134">
        <id>Q13520</id>
    </interactant>
    <interactant intactId="EBI-12187159">
        <id>O43759-2</id>
        <label>SYNGR1</label>
    </interactant>
    <organismsDiffer>false</organismsDiffer>
    <experiments>3</experiments>
</comment>
<comment type="interaction">
    <interactant intactId="EBI-13059134">
        <id>Q13520</id>
    </interactant>
    <interactant intactId="EBI-1049004">
        <id>P57105</id>
        <label>SYNJ2BP</label>
    </interactant>
    <organismsDiffer>false</organismsDiffer>
    <experiments>3</experiments>
</comment>
<comment type="interaction">
    <interactant intactId="EBI-13059134">
        <id>Q13520</id>
    </interactant>
    <interactant intactId="EBI-747259">
        <id>Q03518</id>
        <label>TAP1</label>
    </interactant>
    <organismsDiffer>false</organismsDiffer>
    <experiments>3</experiments>
</comment>
<comment type="interaction">
    <interactant intactId="EBI-13059134">
        <id>Q13520</id>
    </interactant>
    <interactant intactId="EBI-9254454">
        <id>Q96BZ9</id>
        <label>TBC1D20</label>
    </interactant>
    <organismsDiffer>false</organismsDiffer>
    <experiments>3</experiments>
</comment>
<comment type="interaction">
    <interactant intactId="EBI-13059134">
        <id>Q13520</id>
    </interactant>
    <interactant intactId="EBI-355727">
        <id>P02786</id>
        <label>TFRC</label>
    </interactant>
    <organismsDiffer>false</organismsDiffer>
    <experiments>3</experiments>
</comment>
<comment type="interaction">
    <interactant intactId="EBI-13059134">
        <id>Q13520</id>
    </interactant>
    <interactant intactId="EBI-941422">
        <id>P07204</id>
        <label>THBD</label>
    </interactant>
    <organismsDiffer>false</organismsDiffer>
    <experiments>3</experiments>
</comment>
<comment type="interaction">
    <interactant intactId="EBI-13059134">
        <id>Q13520</id>
    </interactant>
    <interactant intactId="EBI-310962">
        <id>Q9UPZ6</id>
        <label>THSD7A</label>
    </interactant>
    <organismsDiffer>false</organismsDiffer>
    <experiments>3</experiments>
</comment>
<comment type="interaction">
    <interactant intactId="EBI-13059134">
        <id>Q13520</id>
    </interactant>
    <interactant intactId="EBI-311394">
        <id>Q9C0I4</id>
        <label>THSD7B</label>
    </interactant>
    <organismsDiffer>false</organismsDiffer>
    <experiments>3</experiments>
</comment>
<comment type="interaction">
    <interactant intactId="EBI-13059134">
        <id>Q13520</id>
    </interactant>
    <interactant intactId="EBI-1047996">
        <id>O14925</id>
        <label>TIMM23</label>
    </interactant>
    <organismsDiffer>false</organismsDiffer>
    <experiments>3</experiments>
</comment>
<comment type="interaction">
    <interactant intactId="EBI-13059134">
        <id>Q13520</id>
    </interactant>
    <interactant intactId="EBI-11337932">
        <id>Q96CP7</id>
        <label>TLCD1</label>
    </interactant>
    <organismsDiffer>false</organismsDiffer>
    <experiments>3</experiments>
</comment>
<comment type="interaction">
    <interactant intactId="EBI-13059134">
        <id>Q13520</id>
    </interactant>
    <interactant intactId="EBI-8644968">
        <id>Q9NV29</id>
        <label>TMEM100</label>
    </interactant>
    <organismsDiffer>false</organismsDiffer>
    <experiments>3</experiments>
</comment>
<comment type="interaction">
    <interactant intactId="EBI-13059134">
        <id>Q13520</id>
    </interactant>
    <interactant intactId="EBI-12845616">
        <id>Q6UX40</id>
        <label>TMEM107</label>
    </interactant>
    <organismsDiffer>false</organismsDiffer>
    <experiments>3</experiments>
</comment>
<comment type="interaction">
    <interactant intactId="EBI-13059134">
        <id>Q13520</id>
    </interactant>
    <interactant intactId="EBI-8633987">
        <id>Q12893</id>
        <label>TMEM115</label>
    </interactant>
    <organismsDiffer>false</organismsDiffer>
    <experiments>3</experiments>
</comment>
<comment type="interaction">
    <interactant intactId="EBI-13059134">
        <id>Q13520</id>
    </interactant>
    <interactant intactId="EBI-727322">
        <id>Q9BXJ8</id>
        <label>TMEM120A</label>
    </interactant>
    <organismsDiffer>false</organismsDiffer>
    <experiments>3</experiments>
</comment>
<comment type="interaction">
    <interactant intactId="EBI-13059134">
        <id>Q13520</id>
    </interactant>
    <interactant intactId="EBI-10171534">
        <id>A0PK00</id>
        <label>TMEM120B</label>
    </interactant>
    <organismsDiffer>false</organismsDiffer>
    <experiments>3</experiments>
</comment>
<comment type="interaction">
    <interactant intactId="EBI-13059134">
        <id>Q13520</id>
    </interactant>
    <interactant intactId="EBI-10694905">
        <id>Q5BJH2-2</id>
        <label>TMEM128</label>
    </interactant>
    <organismsDiffer>false</organismsDiffer>
    <experiments>3</experiments>
</comment>
<comment type="interaction">
    <interactant intactId="EBI-13059134">
        <id>Q13520</id>
    </interactant>
    <interactant intactId="EBI-2844246">
        <id>Q9NV12</id>
        <label>TMEM140</label>
    </interactant>
    <organismsDiffer>false</organismsDiffer>
    <experiments>3</experiments>
</comment>
<comment type="interaction">
    <interactant intactId="EBI-13059134">
        <id>Q13520</id>
    </interactant>
    <interactant intactId="EBI-13342951">
        <id>Q96AN5</id>
        <label>TMEM143</label>
    </interactant>
    <organismsDiffer>false</organismsDiffer>
    <experiments>3</experiments>
</comment>
<comment type="interaction">
    <interactant intactId="EBI-13059134">
        <id>Q13520</id>
    </interactant>
    <interactant intactId="EBI-12876358">
        <id>Q7Z5S9</id>
        <label>TMEM144</label>
    </interactant>
    <organismsDiffer>false</organismsDiffer>
    <experiments>3</experiments>
</comment>
<comment type="interaction">
    <interactant intactId="EBI-13059134">
        <id>Q13520</id>
    </interactant>
    <interactant intactId="EBI-2800360">
        <id>Q9Y6G1</id>
        <label>TMEM14A</label>
    </interactant>
    <organismsDiffer>false</organismsDiffer>
    <experiments>3</experiments>
</comment>
<comment type="interaction">
    <interactant intactId="EBI-13059134">
        <id>Q13520</id>
    </interactant>
    <interactant intactId="EBI-17684533">
        <id>Q9NRX6</id>
        <label>TMEM167B</label>
    </interactant>
    <organismsDiffer>false</organismsDiffer>
    <experiments>3</experiments>
</comment>
<comment type="interaction">
    <interactant intactId="EBI-13059134">
        <id>Q13520</id>
    </interactant>
    <interactant intactId="EBI-741829">
        <id>Q96HH6</id>
        <label>TMEM19</label>
    </interactant>
    <organismsDiffer>false</organismsDiffer>
    <experiments>3</experiments>
</comment>
<comment type="interaction">
    <interactant intactId="EBI-13059134">
        <id>Q13520</id>
    </interactant>
    <interactant intactId="EBI-10265825">
        <id>Q8N511</id>
        <label>TMEM199</label>
    </interactant>
    <organismsDiffer>false</organismsDiffer>
    <experiments>3</experiments>
</comment>
<comment type="interaction">
    <interactant intactId="EBI-13059134">
        <id>Q13520</id>
    </interactant>
    <interactant intactId="EBI-12274070">
        <id>Q969S6</id>
        <label>TMEM203</label>
    </interactant>
    <organismsDiffer>false</organismsDiffer>
    <experiments>3</experiments>
</comment>
<comment type="interaction">
    <interactant intactId="EBI-13059134">
        <id>Q13520</id>
    </interactant>
    <interactant intactId="EBI-10173151">
        <id>A2RU14</id>
        <label>TMEM218</label>
    </interactant>
    <organismsDiffer>false</organismsDiffer>
    <experiments>3</experiments>
</comment>
<comment type="interaction">
    <interactant intactId="EBI-13059134">
        <id>Q13520</id>
    </interactant>
    <interactant intactId="EBI-347385">
        <id>Q9H0R3</id>
        <label>TMEM222</label>
    </interactant>
    <organismsDiffer>false</organismsDiffer>
    <experiments>3</experiments>
</comment>
<comment type="interaction">
    <interactant intactId="EBI-13059134">
        <id>Q13520</id>
    </interactant>
    <interactant intactId="EBI-12195227">
        <id>Q8NBD8</id>
        <label>TMEM229B</label>
    </interactant>
    <organismsDiffer>false</organismsDiffer>
    <experiments>3</experiments>
</comment>
<comment type="interaction">
    <interactant intactId="EBI-13059134">
        <id>Q13520</id>
    </interactant>
    <interactant intactId="EBI-8642211">
        <id>Q8WY98</id>
        <label>TMEM234</label>
    </interactant>
    <organismsDiffer>false</organismsDiffer>
    <experiments>3</experiments>
</comment>
<comment type="interaction">
    <interactant intactId="EBI-13059134">
        <id>Q13520</id>
    </interactant>
    <interactant intactId="EBI-11528917">
        <id>Q8WW34-2</id>
        <label>TMEM239</label>
    </interactant>
    <organismsDiffer>false</organismsDiffer>
    <experiments>3</experiments>
</comment>
<comment type="interaction">
    <interactant intactId="EBI-13059134">
        <id>Q13520</id>
    </interactant>
    <interactant intactId="EBI-10315004">
        <id>Q9NWH2</id>
        <label>TMEM242</label>
    </interactant>
    <organismsDiffer>false</organismsDiffer>
    <experiments>3</experiments>
</comment>
<comment type="interaction">
    <interactant intactId="EBI-13059134">
        <id>Q13520</id>
    </interactant>
    <interactant intactId="EBI-12887458">
        <id>Q9BU79</id>
        <label>TMEM243</label>
    </interactant>
    <organismsDiffer>false</organismsDiffer>
    <experiments>3</experiments>
</comment>
<comment type="interaction">
    <interactant intactId="EBI-13059134">
        <id>Q13520</id>
    </interactant>
    <interactant intactId="EBI-11956809">
        <id>Q8TBM7</id>
        <label>TMEM254</label>
    </interactant>
    <organismsDiffer>false</organismsDiffer>
    <experiments>3</experiments>
</comment>
<comment type="interaction">
    <interactant intactId="EBI-13059134">
        <id>Q13520</id>
    </interactant>
    <interactant intactId="EBI-17180389">
        <id>E9PQX1</id>
        <label>TMEM262</label>
    </interactant>
    <organismsDiffer>false</organismsDiffer>
    <experiments>3</experiments>
</comment>
<comment type="interaction">
    <interactant intactId="EBI-13059134">
        <id>Q13520</id>
    </interactant>
    <interactant intactId="EBI-12038591">
        <id>Q69YG0</id>
        <label>TMEM42</label>
    </interactant>
    <organismsDiffer>false</organismsDiffer>
    <experiments>3</experiments>
</comment>
<comment type="interaction">
    <interactant intactId="EBI-13059134">
        <id>Q13520</id>
    </interactant>
    <interactant intactId="EBI-12903814">
        <id>O95807</id>
        <label>TMEM50A</label>
    </interactant>
    <organismsDiffer>false</organismsDiffer>
    <experiments>3</experiments>
</comment>
<comment type="interaction">
    <interactant intactId="EBI-13059134">
        <id>Q13520</id>
    </interactant>
    <interactant intactId="EBI-726044">
        <id>Q9NW97</id>
        <label>TMEM51</label>
    </interactant>
    <organismsDiffer>false</organismsDiffer>
    <experiments>3</experiments>
</comment>
<comment type="interaction">
    <interactant intactId="EBI-13059134">
        <id>Q13520</id>
    </interactant>
    <interactant intactId="EBI-2852148">
        <id>Q9H2L4</id>
        <label>TMEM60</label>
    </interactant>
    <organismsDiffer>false</organismsDiffer>
    <experiments>3</experiments>
</comment>
<comment type="interaction">
    <interactant intactId="EBI-13059134">
        <id>Q13520</id>
    </interactant>
    <interactant intactId="EBI-6656213">
        <id>Q6PI78</id>
        <label>TMEM65</label>
    </interactant>
    <organismsDiffer>false</organismsDiffer>
    <experiments>3</experiments>
</comment>
<comment type="interaction">
    <interactant intactId="EBI-13059134">
        <id>Q13520</id>
    </interactant>
    <interactant intactId="EBI-17963363">
        <id>Q5SWH9</id>
        <label>TMEM69</label>
    </interactant>
    <organismsDiffer>false</organismsDiffer>
    <experiments>3</experiments>
</comment>
<comment type="interaction">
    <interactant intactId="EBI-13059134">
        <id>Q13520</id>
    </interactant>
    <interactant intactId="EBI-10292091">
        <id>Q96NL1</id>
        <label>TMEM74</label>
    </interactant>
    <organismsDiffer>false</organismsDiffer>
    <experiments>3</experiments>
</comment>
<comment type="interaction">
    <interactant intactId="EBI-13059134">
        <id>Q13520</id>
    </interactant>
    <interactant intactId="EBI-2548832">
        <id>Q8N661</id>
        <label>TMEM86B</label>
    </interactant>
    <organismsDiffer>false</organismsDiffer>
    <experiments>3</experiments>
</comment>
<comment type="interaction">
    <interactant intactId="EBI-13059134">
        <id>Q13520</id>
    </interactant>
    <interactant intactId="EBI-12111910">
        <id>Q5BJF2</id>
        <label>TMEM97</label>
    </interactant>
    <organismsDiffer>false</organismsDiffer>
    <experiments>3</experiments>
</comment>
<comment type="interaction">
    <interactant intactId="EBI-13059134">
        <id>Q13520</id>
    </interactant>
    <interactant intactId="EBI-2820477">
        <id>Q71RG4</id>
        <label>TMUB2</label>
    </interactant>
    <organismsDiffer>false</organismsDiffer>
    <experiments>3</experiments>
</comment>
<comment type="interaction">
    <interactant intactId="EBI-13059134">
        <id>Q13520</id>
    </interactant>
    <interactant intactId="EBI-6447886">
        <id>Q9Y320</id>
        <label>TMX2</label>
    </interactant>
    <organismsDiffer>false</organismsDiffer>
    <experiments>3</experiments>
</comment>
<comment type="interaction">
    <interactant intactId="EBI-13059134">
        <id>Q13520</id>
    </interactant>
    <interactant intactId="EBI-717441">
        <id>O14798</id>
        <label>TNFRSF10C</label>
    </interactant>
    <organismsDiffer>false</organismsDiffer>
    <experiments>3</experiments>
</comment>
<comment type="interaction">
    <interactant intactId="EBI-13059134">
        <id>Q13520</id>
    </interactant>
    <interactant intactId="EBI-1047508">
        <id>Q9NS69</id>
        <label>TOMM22</label>
    </interactant>
    <organismsDiffer>false</organismsDiffer>
    <experiments>3</experiments>
</comment>
<comment type="interaction">
    <interactant intactId="EBI-13059134">
        <id>Q13520</id>
    </interactant>
    <interactant intactId="EBI-10826510">
        <id>Q96B49</id>
        <label>TOMM6</label>
    </interactant>
    <organismsDiffer>false</organismsDiffer>
    <experiments>3</experiments>
</comment>
<comment type="interaction">
    <interactant intactId="EBI-13059134">
        <id>Q13520</id>
    </interactant>
    <interactant intactId="EBI-17249488">
        <id>Q6ZUI0</id>
        <label>TPRG1</label>
    </interactant>
    <organismsDiffer>false</organismsDiffer>
    <experiments>3</experiments>
</comment>
<comment type="interaction">
    <interactant intactId="EBI-13059134">
        <id>Q13520</id>
    </interactant>
    <interactant intactId="EBI-16746122">
        <id>Q9NSU2-1</id>
        <label>TREX1</label>
    </interactant>
    <organismsDiffer>false</organismsDiffer>
    <experiments>3</experiments>
</comment>
<comment type="interaction">
    <interactant intactId="EBI-13059134">
        <id>Q13520</id>
    </interactant>
    <interactant intactId="EBI-12195249">
        <id>Q5TGU0</id>
        <label>TSPO2</label>
    </interactant>
    <organismsDiffer>false</organismsDiffer>
    <experiments>3</experiments>
</comment>
<comment type="interaction">
    <interactant intactId="EBI-13059134">
        <id>Q13520</id>
    </interactant>
    <interactant intactId="EBI-10243654">
        <id>Q5BVD1</id>
        <label>TTMP</label>
    </interactant>
    <organismsDiffer>false</organismsDiffer>
    <experiments>3</experiments>
</comment>
<comment type="interaction">
    <interactant intactId="EBI-13059134">
        <id>Q13520</id>
    </interactant>
    <interactant intactId="EBI-2340110">
        <id>Q8N2K1</id>
        <label>UBE2J2</label>
    </interactant>
    <organismsDiffer>false</organismsDiffer>
    <experiments>3</experiments>
</comment>
<comment type="interaction">
    <interactant intactId="EBI-13059134">
        <id>Q13520</id>
    </interactant>
    <interactant intactId="EBI-12867288">
        <id>Q8WUN7</id>
        <label>UBTD2</label>
    </interactant>
    <organismsDiffer>false</organismsDiffer>
    <experiments>3</experiments>
</comment>
<comment type="interaction">
    <interactant intactId="EBI-13059134">
        <id>Q13520</id>
    </interactant>
    <interactant intactId="EBI-1993850">
        <id>O00124</id>
        <label>UBXN8</label>
    </interactant>
    <organismsDiffer>false</organismsDiffer>
    <experiments>3</experiments>
</comment>
<comment type="interaction">
    <interactant intactId="EBI-13059134">
        <id>Q13520</id>
    </interactant>
    <interactant intactId="EBI-7601760">
        <id>Q53HI1</id>
        <label>UNC50</label>
    </interactant>
    <organismsDiffer>false</organismsDiffer>
    <experiments>3</experiments>
</comment>
<comment type="interaction">
    <interactant intactId="EBI-13059134">
        <id>Q13520</id>
    </interactant>
    <interactant intactId="EBI-13356252">
        <id>Q86WB7-2</id>
        <label>UNC93A</label>
    </interactant>
    <organismsDiffer>false</organismsDiffer>
    <experiments>3</experiments>
</comment>
<comment type="interaction">
    <interactant intactId="EBI-13059134">
        <id>Q13520</id>
    </interactant>
    <interactant intactId="EBI-742842">
        <id>Q9NZ43</id>
        <label>USE1</label>
    </interactant>
    <organismsDiffer>false</organismsDiffer>
    <experiments>3</experiments>
</comment>
<comment type="interaction">
    <interactant intactId="EBI-13059134">
        <id>Q13520</id>
    </interactant>
    <interactant intactId="EBI-12097582">
        <id>P23763-3</id>
        <label>VAMP1</label>
    </interactant>
    <organismsDiffer>false</organismsDiffer>
    <experiments>3</experiments>
</comment>
<comment type="interaction">
    <interactant intactId="EBI-13059134">
        <id>Q13520</id>
    </interactant>
    <interactant intactId="EBI-520113">
        <id>P63027</id>
        <label>VAMP2</label>
    </interactant>
    <organismsDiffer>false</organismsDiffer>
    <experiments>3</experiments>
</comment>
<comment type="interaction">
    <interactant intactId="EBI-13059134">
        <id>Q13520</id>
    </interactant>
    <interactant intactId="EBI-722343">
        <id>Q15836</id>
        <label>VAMP3</label>
    </interactant>
    <organismsDiffer>false</organismsDiffer>
    <experiments>3</experiments>
</comment>
<comment type="interaction">
    <interactant intactId="EBI-13059134">
        <id>Q13520</id>
    </interactant>
    <interactant intactId="EBI-744953">
        <id>O75379</id>
        <label>VAMP4</label>
    </interactant>
    <organismsDiffer>false</organismsDiffer>
    <experiments>3</experiments>
</comment>
<comment type="interaction">
    <interactant intactId="EBI-13059134">
        <id>Q13520</id>
    </interactant>
    <interactant intactId="EBI-10191195">
        <id>O95183</id>
        <label>VAMP5</label>
    </interactant>
    <organismsDiffer>false</organismsDiffer>
    <experiments>3</experiments>
</comment>
<comment type="interaction">
    <interactant intactId="EBI-13059134">
        <id>Q13520</id>
    </interactant>
    <interactant intactId="EBI-1059156">
        <id>Q9P0L0</id>
        <label>VAPA</label>
    </interactant>
    <organismsDiffer>false</organismsDiffer>
    <experiments>3</experiments>
</comment>
<comment type="interaction">
    <interactant intactId="EBI-13059134">
        <id>Q13520</id>
    </interactant>
    <interactant intactId="EBI-1188298">
        <id>O95292</id>
        <label>VAPB</label>
    </interactant>
    <organismsDiffer>false</organismsDiffer>
    <experiments>3</experiments>
</comment>
<comment type="interaction">
    <interactant intactId="EBI-13059134">
        <id>Q13520</id>
    </interactant>
    <interactant intactId="EBI-11337915">
        <id>Q8N0U8</id>
        <label>VKORC1L1</label>
    </interactant>
    <organismsDiffer>false</organismsDiffer>
    <experiments>3</experiments>
</comment>
<comment type="interaction">
    <interactant intactId="EBI-13059134">
        <id>Q13520</id>
    </interactant>
    <interactant intactId="EBI-1055364">
        <id>Q3ZAQ7</id>
        <label>VMA21</label>
    </interactant>
    <organismsDiffer>false</organismsDiffer>
    <experiments>3</experiments>
</comment>
<comment type="interaction">
    <interactant intactId="EBI-13059134">
        <id>Q13520</id>
    </interactant>
    <interactant intactId="EBI-1207615">
        <id>Q86Y07</id>
        <label>VRK2</label>
    </interactant>
    <organismsDiffer>false</organismsDiffer>
    <experiments>3</experiments>
</comment>
<comment type="interaction">
    <interactant intactId="EBI-13059134">
        <id>Q13520</id>
    </interactant>
    <interactant intactId="EBI-12190699">
        <id>Q6UX27-3</id>
        <label>VSTM1</label>
    </interactant>
    <organismsDiffer>false</organismsDiffer>
    <experiments>3</experiments>
</comment>
<comment type="interaction">
    <interactant intactId="EBI-13059134">
        <id>Q13520</id>
    </interactant>
    <interactant intactId="EBI-723716">
        <id>Q9UEU0</id>
        <label>VTI1B</label>
    </interactant>
    <organismsDiffer>false</organismsDiffer>
    <experiments>3</experiments>
</comment>
<comment type="interaction">
    <interactant intactId="EBI-13059134">
        <id>Q13520</id>
    </interactant>
    <interactant intactId="EBI-720609">
        <id>O76024</id>
        <label>WFS1</label>
    </interactant>
    <organismsDiffer>false</organismsDiffer>
    <experiments>3</experiments>
</comment>
<comment type="interaction">
    <interactant intactId="EBI-13059134">
        <id>Q13520</id>
    </interactant>
    <interactant intactId="EBI-2799703">
        <id>O95070</id>
        <label>YIF1A</label>
    </interactant>
    <organismsDiffer>false</organismsDiffer>
    <experiments>3</experiments>
</comment>
<comment type="interaction">
    <interactant intactId="EBI-13059134">
        <id>Q13520</id>
    </interactant>
    <interactant intactId="EBI-7850136">
        <id>Q9Y548</id>
        <label>YIPF1</label>
    </interactant>
    <organismsDiffer>false</organismsDiffer>
    <experiments>3</experiments>
</comment>
<comment type="interaction">
    <interactant intactId="EBI-13059134">
        <id>Q13520</id>
    </interactant>
    <interactant intactId="EBI-751204">
        <id>Q9BWQ6</id>
        <label>YIPF2</label>
    </interactant>
    <organismsDiffer>false</organismsDiffer>
    <experiments>3</experiments>
</comment>
<comment type="interaction">
    <interactant intactId="EBI-13059134">
        <id>Q13520</id>
    </interactant>
    <interactant intactId="EBI-751253">
        <id>Q9BSR8</id>
        <label>YIPF4</label>
    </interactant>
    <organismsDiffer>false</organismsDiffer>
    <experiments>3</experiments>
</comment>
<comment type="interaction">
    <interactant intactId="EBI-13059134">
        <id>Q13520</id>
    </interactant>
    <interactant intactId="EBI-751210">
        <id>Q96EC8</id>
        <label>YIPF6</label>
    </interactant>
    <organismsDiffer>false</organismsDiffer>
    <experiments>3</experiments>
</comment>
<comment type="interaction">
    <interactant intactId="EBI-13059134">
        <id>Q13520</id>
    </interactant>
    <interactant intactId="EBI-2849773">
        <id>Q8IVQ6</id>
        <label>ZDHHC21</label>
    </interactant>
    <organismsDiffer>false</organismsDiffer>
    <experiments>3</experiments>
</comment>
<comment type="interaction">
    <interactant intactId="EBI-13059134">
        <id>Q13520</id>
    </interactant>
    <interactant intactId="EBI-10254561">
        <id>Q6UX98</id>
        <label>ZDHHC24</label>
    </interactant>
    <organismsDiffer>false</organismsDiffer>
    <experiments>3</experiments>
</comment>
<comment type="interaction">
    <interactant intactId="EBI-13059134">
        <id>Q13520</id>
    </interactant>
    <interactant intactId="EBI-6427977">
        <id>Q96SQ5</id>
        <label>ZNF587</label>
    </interactant>
    <organismsDiffer>false</organismsDiffer>
    <experiments>3</experiments>
</comment>
<comment type="interaction">
    <interactant intactId="EBI-13059134">
        <id>Q13520</id>
    </interactant>
    <interactant intactId="EBI-13387614">
        <id>A0A087WZY1</id>
    </interactant>
    <organismsDiffer>false</organismsDiffer>
    <experiments>3</experiments>
</comment>
<comment type="subcellular location">
    <subcellularLocation>
        <location evidence="3">Cytoplasmic vesicle membrane</location>
        <topology evidence="4">Multi-pass membrane protein</topology>
    </subcellularLocation>
</comment>
<comment type="domain">
    <text evidence="1">Aquaporins contain two tandem repeats each containing three membrane-spanning domains and a pore-forming loop with the signature motif Asn-Pro-Ala (NPA).</text>
</comment>
<comment type="similarity">
    <text evidence="8">Belongs to the MIP/aquaporin (TC 1.A.8) family.</text>
</comment>
<protein>
    <recommendedName>
        <fullName evidence="3">Aquaporin-6</fullName>
        <shortName>AQP-6</shortName>
    </recommendedName>
    <alternativeName>
        <fullName>Aquaporin-2-like</fullName>
    </alternativeName>
    <alternativeName>
        <fullName evidence="7">Kidney-specific aquaporin</fullName>
        <shortName evidence="7">hKID</shortName>
    </alternativeName>
</protein>
<evidence type="ECO:0000250" key="1">
    <source>
        <dbReference type="UniProtKB" id="P41181"/>
    </source>
</evidence>
<evidence type="ECO:0000250" key="2">
    <source>
        <dbReference type="UniProtKB" id="P55064"/>
    </source>
</evidence>
<evidence type="ECO:0000250" key="3">
    <source>
        <dbReference type="UniProtKB" id="Q9WTY0"/>
    </source>
</evidence>
<evidence type="ECO:0000255" key="4"/>
<evidence type="ECO:0000256" key="5">
    <source>
        <dbReference type="SAM" id="MobiDB-lite"/>
    </source>
</evidence>
<evidence type="ECO:0000269" key="6">
    <source>
    </source>
</evidence>
<evidence type="ECO:0000303" key="7">
    <source>
    </source>
</evidence>
<evidence type="ECO:0000305" key="8"/>
<evidence type="ECO:0000312" key="9">
    <source>
        <dbReference type="HGNC" id="HGNC:639"/>
    </source>
</evidence>
<accession>Q13520</accession>
<sequence length="282" mass="29370">MDAVEPGGRGWASMLACRLWKAISRALFAEFLATGLYVFFGVGSVMRWPTALPSVLQIAITFNLVTAMAVQVTWKASGAHANPAVTLAFLVGSHISLPRAVAYVAAQLVGATVGAALLYGVMPGDIRETLGINVVRNSVSTGQAVAVELLLTLQLVLCVFASTDSRQTSGSPATMIGISVALGHLIGIHFTGCSMNPARSFGPAIIIGKFTVHWVFWVGPLMGALLASLIYNFVLFPDTKTLAQRLAILTGTVEVGTGAGAGAEPLKKESQPGSGAVEMESV</sequence>
<feature type="chain" id="PRO_0000063955" description="Aquaporin-6">
    <location>
        <begin position="1"/>
        <end position="282"/>
    </location>
</feature>
<feature type="topological domain" description="Cytoplasmic" evidence="1">
    <location>
        <begin position="1"/>
        <end position="25"/>
    </location>
</feature>
<feature type="transmembrane region" description="Helical" evidence="1">
    <location>
        <begin position="26"/>
        <end position="46"/>
    </location>
</feature>
<feature type="topological domain" description="Extracellular" evidence="1">
    <location>
        <begin position="47"/>
        <end position="54"/>
    </location>
</feature>
<feature type="transmembrane region" description="Helical" evidence="1">
    <location>
        <begin position="55"/>
        <end position="73"/>
    </location>
</feature>
<feature type="topological domain" description="Cytoplasmic" evidence="1">
    <location>
        <begin position="74"/>
        <end position="78"/>
    </location>
</feature>
<feature type="intramembrane region" description="Discontinuously helical" evidence="1">
    <location>
        <begin position="79"/>
        <end position="88"/>
    </location>
</feature>
<feature type="topological domain" description="Cytoplasmic" evidence="1">
    <location>
        <begin position="89"/>
        <end position="99"/>
    </location>
</feature>
<feature type="transmembrane region" description="Helical" evidence="1">
    <location>
        <begin position="100"/>
        <end position="121"/>
    </location>
</feature>
<feature type="topological domain" description="Extracellular" evidence="1">
    <location>
        <begin position="122"/>
        <end position="141"/>
    </location>
</feature>
<feature type="transmembrane region" description="Helical" evidence="1">
    <location>
        <begin position="142"/>
        <end position="162"/>
    </location>
</feature>
<feature type="topological domain" description="Cytoplasmic" evidence="1">
    <location>
        <begin position="163"/>
        <end position="168"/>
    </location>
</feature>
<feature type="transmembrane region" description="Helical" evidence="1">
    <location>
        <begin position="169"/>
        <end position="188"/>
    </location>
</feature>
<feature type="topological domain" description="Extracellular" evidence="1">
    <location>
        <begin position="189"/>
        <end position="192"/>
    </location>
</feature>
<feature type="intramembrane region" description="Discontinuously helical" evidence="1">
    <location>
        <begin position="193"/>
        <end position="205"/>
    </location>
</feature>
<feature type="topological domain" description="Extracellular" evidence="1">
    <location>
        <begin position="206"/>
        <end position="213"/>
    </location>
</feature>
<feature type="transmembrane region" description="Helical" evidence="1">
    <location>
        <begin position="214"/>
        <end position="234"/>
    </location>
</feature>
<feature type="topological domain" description="Cytoplasmic" evidence="1">
    <location>
        <begin position="235"/>
        <end position="282"/>
    </location>
</feature>
<feature type="region of interest" description="Disordered" evidence="5">
    <location>
        <begin position="260"/>
        <end position="282"/>
    </location>
</feature>
<feature type="short sequence motif" description="NPA 1" evidence="1">
    <location>
        <begin position="82"/>
        <end position="84"/>
    </location>
</feature>
<feature type="short sequence motif" description="NPA 2" evidence="1">
    <location>
        <begin position="196"/>
        <end position="198"/>
    </location>
</feature>
<feature type="sequence variant" id="VAR_047233" description="In dbSNP:rs17124220.">
    <original>V</original>
    <variation>I</variation>
    <location>
        <position position="234"/>
    </location>
</feature>
<feature type="sequence conflict" description="In Ref. 1; AAB41566." evidence="8" ref="1">
    <original>VE</original>
    <variation>EV</variation>
    <location>
        <begin position="4"/>
        <end position="5"/>
    </location>
</feature>
<feature type="sequence conflict" description="In Ref. 1; AAB41566." evidence="8" ref="1">
    <original>A</original>
    <variation>T</variation>
    <location>
        <position position="76"/>
    </location>
</feature>
<feature type="sequence conflict" description="In Ref. 1; AAB41566." evidence="8" ref="1">
    <original>V</original>
    <variation>W</variation>
    <location>
        <position position="180"/>
    </location>
</feature>
<feature type="sequence conflict" description="In Ref. 1; AAB41566." evidence="8" ref="1">
    <original>H</original>
    <variation>L</variation>
    <location>
        <position position="189"/>
    </location>
</feature>
<feature type="sequence conflict" description="In Ref. 1; AAB41566." evidence="8" ref="1">
    <original>G</original>
    <variation>R</variation>
    <location>
        <position position="260"/>
    </location>
</feature>
<keyword id="KW-0968">Cytoplasmic vesicle</keyword>
<keyword id="KW-0472">Membrane</keyword>
<keyword id="KW-1185">Reference proteome</keyword>
<keyword id="KW-0677">Repeat</keyword>
<keyword id="KW-0812">Transmembrane</keyword>
<keyword id="KW-1133">Transmembrane helix</keyword>
<keyword id="KW-0813">Transport</keyword>
<name>AQP6_HUMAN</name>
<reference key="1">
    <citation type="journal article" date="1996" name="Genomics">
        <title>cDNA cloning and gene structure of a novel water channel expressed exclusively in human kidney: evidence for a gene cluster of aquaporins at chromosome locus 12q13.</title>
        <authorList>
            <person name="Ma T."/>
            <person name="Yang B."/>
            <person name="Kuo W.L."/>
            <person name="Verkman A.S."/>
        </authorList>
    </citation>
    <scope>NUCLEOTIDE SEQUENCE [MRNA]</scope>
    <scope>FUNCTION</scope>
    <scope>TRANSPORTER ACTIVITY</scope>
    <source>
        <tissue>Kidney</tissue>
    </source>
</reference>
<reference key="2">
    <citation type="journal article" date="2006" name="Nature">
        <title>The finished DNA sequence of human chromosome 12.</title>
        <authorList>
            <person name="Scherer S.E."/>
            <person name="Muzny D.M."/>
            <person name="Buhay C.J."/>
            <person name="Chen R."/>
            <person name="Cree A."/>
            <person name="Ding Y."/>
            <person name="Dugan-Rocha S."/>
            <person name="Gill R."/>
            <person name="Gunaratne P."/>
            <person name="Harris R.A."/>
            <person name="Hawes A.C."/>
            <person name="Hernandez J."/>
            <person name="Hodgson A.V."/>
            <person name="Hume J."/>
            <person name="Jackson A."/>
            <person name="Khan Z.M."/>
            <person name="Kovar-Smith C."/>
            <person name="Lewis L.R."/>
            <person name="Lozado R.J."/>
            <person name="Metzker M.L."/>
            <person name="Milosavljevic A."/>
            <person name="Miner G.R."/>
            <person name="Montgomery K.T."/>
            <person name="Morgan M.B."/>
            <person name="Nazareth L.V."/>
            <person name="Scott G."/>
            <person name="Sodergren E."/>
            <person name="Song X.-Z."/>
            <person name="Steffen D."/>
            <person name="Lovering R.C."/>
            <person name="Wheeler D.A."/>
            <person name="Worley K.C."/>
            <person name="Yuan Y."/>
            <person name="Zhang Z."/>
            <person name="Adams C.Q."/>
            <person name="Ansari-Lari M.A."/>
            <person name="Ayele M."/>
            <person name="Brown M.J."/>
            <person name="Chen G."/>
            <person name="Chen Z."/>
            <person name="Clerc-Blankenburg K.P."/>
            <person name="Davis C."/>
            <person name="Delgado O."/>
            <person name="Dinh H.H."/>
            <person name="Draper H."/>
            <person name="Gonzalez-Garay M.L."/>
            <person name="Havlak P."/>
            <person name="Jackson L.R."/>
            <person name="Jacob L.S."/>
            <person name="Kelly S.H."/>
            <person name="Li L."/>
            <person name="Li Z."/>
            <person name="Liu J."/>
            <person name="Liu W."/>
            <person name="Lu J."/>
            <person name="Maheshwari M."/>
            <person name="Nguyen B.-V."/>
            <person name="Okwuonu G.O."/>
            <person name="Pasternak S."/>
            <person name="Perez L.M."/>
            <person name="Plopper F.J.H."/>
            <person name="Santibanez J."/>
            <person name="Shen H."/>
            <person name="Tabor P.E."/>
            <person name="Verduzco D."/>
            <person name="Waldron L."/>
            <person name="Wang Q."/>
            <person name="Williams G.A."/>
            <person name="Zhang J."/>
            <person name="Zhou J."/>
            <person name="Allen C.C."/>
            <person name="Amin A.G."/>
            <person name="Anyalebechi V."/>
            <person name="Bailey M."/>
            <person name="Barbaria J.A."/>
            <person name="Bimage K.E."/>
            <person name="Bryant N.P."/>
            <person name="Burch P.E."/>
            <person name="Burkett C.E."/>
            <person name="Burrell K.L."/>
            <person name="Calderon E."/>
            <person name="Cardenas V."/>
            <person name="Carter K."/>
            <person name="Casias K."/>
            <person name="Cavazos I."/>
            <person name="Cavazos S.R."/>
            <person name="Ceasar H."/>
            <person name="Chacko J."/>
            <person name="Chan S.N."/>
            <person name="Chavez D."/>
            <person name="Christopoulos C."/>
            <person name="Chu J."/>
            <person name="Cockrell R."/>
            <person name="Cox C.D."/>
            <person name="Dang M."/>
            <person name="Dathorne S.R."/>
            <person name="David R."/>
            <person name="Davis C.M."/>
            <person name="Davy-Carroll L."/>
            <person name="Deshazo D.R."/>
            <person name="Donlin J.E."/>
            <person name="D'Souza L."/>
            <person name="Eaves K.A."/>
            <person name="Egan A."/>
            <person name="Emery-Cohen A.J."/>
            <person name="Escotto M."/>
            <person name="Flagg N."/>
            <person name="Forbes L.D."/>
            <person name="Gabisi A.M."/>
            <person name="Garza M."/>
            <person name="Hamilton C."/>
            <person name="Henderson N."/>
            <person name="Hernandez O."/>
            <person name="Hines S."/>
            <person name="Hogues M.E."/>
            <person name="Huang M."/>
            <person name="Idlebird D.G."/>
            <person name="Johnson R."/>
            <person name="Jolivet A."/>
            <person name="Jones S."/>
            <person name="Kagan R."/>
            <person name="King L.M."/>
            <person name="Leal B."/>
            <person name="Lebow H."/>
            <person name="Lee S."/>
            <person name="LeVan J.M."/>
            <person name="Lewis L.C."/>
            <person name="London P."/>
            <person name="Lorensuhewa L.M."/>
            <person name="Loulseged H."/>
            <person name="Lovett D.A."/>
            <person name="Lucier A."/>
            <person name="Lucier R.L."/>
            <person name="Ma J."/>
            <person name="Madu R.C."/>
            <person name="Mapua P."/>
            <person name="Martindale A.D."/>
            <person name="Martinez E."/>
            <person name="Massey E."/>
            <person name="Mawhiney S."/>
            <person name="Meador M.G."/>
            <person name="Mendez S."/>
            <person name="Mercado C."/>
            <person name="Mercado I.C."/>
            <person name="Merritt C.E."/>
            <person name="Miner Z.L."/>
            <person name="Minja E."/>
            <person name="Mitchell T."/>
            <person name="Mohabbat F."/>
            <person name="Mohabbat K."/>
            <person name="Montgomery B."/>
            <person name="Moore N."/>
            <person name="Morris S."/>
            <person name="Munidasa M."/>
            <person name="Ngo R.N."/>
            <person name="Nguyen N.B."/>
            <person name="Nickerson E."/>
            <person name="Nwaokelemeh O.O."/>
            <person name="Nwokenkwo S."/>
            <person name="Obregon M."/>
            <person name="Oguh M."/>
            <person name="Oragunye N."/>
            <person name="Oviedo R.J."/>
            <person name="Parish B.J."/>
            <person name="Parker D.N."/>
            <person name="Parrish J."/>
            <person name="Parks K.L."/>
            <person name="Paul H.A."/>
            <person name="Payton B.A."/>
            <person name="Perez A."/>
            <person name="Perrin W."/>
            <person name="Pickens A."/>
            <person name="Primus E.L."/>
            <person name="Pu L.-L."/>
            <person name="Puazo M."/>
            <person name="Quiles M.M."/>
            <person name="Quiroz J.B."/>
            <person name="Rabata D."/>
            <person name="Reeves K."/>
            <person name="Ruiz S.J."/>
            <person name="Shao H."/>
            <person name="Sisson I."/>
            <person name="Sonaike T."/>
            <person name="Sorelle R.P."/>
            <person name="Sutton A.E."/>
            <person name="Svatek A.F."/>
            <person name="Svetz L.A."/>
            <person name="Tamerisa K.S."/>
            <person name="Taylor T.R."/>
            <person name="Teague B."/>
            <person name="Thomas N."/>
            <person name="Thorn R.D."/>
            <person name="Trejos Z.Y."/>
            <person name="Trevino B.K."/>
            <person name="Ukegbu O.N."/>
            <person name="Urban J.B."/>
            <person name="Vasquez L.I."/>
            <person name="Vera V.A."/>
            <person name="Villasana D.M."/>
            <person name="Wang L."/>
            <person name="Ward-Moore S."/>
            <person name="Warren J.T."/>
            <person name="Wei X."/>
            <person name="White F."/>
            <person name="Williamson A.L."/>
            <person name="Wleczyk R."/>
            <person name="Wooden H.S."/>
            <person name="Wooden S.H."/>
            <person name="Yen J."/>
            <person name="Yoon L."/>
            <person name="Yoon V."/>
            <person name="Zorrilla S.E."/>
            <person name="Nelson D."/>
            <person name="Kucherlapati R."/>
            <person name="Weinstock G."/>
            <person name="Gibbs R.A."/>
        </authorList>
    </citation>
    <scope>NUCLEOTIDE SEQUENCE [LARGE SCALE GENOMIC DNA]</scope>
</reference>
<gene>
    <name evidence="9" type="primary">AQP6</name>
    <name evidence="9" type="synonym">AQP2L</name>
</gene>
<proteinExistence type="evidence at protein level"/>
<dbReference type="EMBL" id="U48408">
    <property type="protein sequence ID" value="AAB41566.1"/>
    <property type="molecule type" value="mRNA"/>
</dbReference>
<dbReference type="EMBL" id="AC025154">
    <property type="status" value="NOT_ANNOTATED_CDS"/>
    <property type="molecule type" value="Genomic_DNA"/>
</dbReference>
<dbReference type="CCDS" id="CCDS31798.1"/>
<dbReference type="RefSeq" id="NP_001643.2">
    <property type="nucleotide sequence ID" value="NM_001652.4"/>
</dbReference>
<dbReference type="SMR" id="Q13520"/>
<dbReference type="BioGRID" id="106859">
    <property type="interactions" value="337"/>
</dbReference>
<dbReference type="FunCoup" id="Q13520">
    <property type="interactions" value="141"/>
</dbReference>
<dbReference type="IntAct" id="Q13520">
    <property type="interactions" value="297"/>
</dbReference>
<dbReference type="STRING" id="9606.ENSP00000320247"/>
<dbReference type="TCDB" id="1.A.8.8.4">
    <property type="family name" value="the major intrinsic protein (mip) family"/>
</dbReference>
<dbReference type="iPTMnet" id="Q13520"/>
<dbReference type="PhosphoSitePlus" id="Q13520"/>
<dbReference type="BioMuta" id="AQP6"/>
<dbReference type="DMDM" id="212276421"/>
<dbReference type="PaxDb" id="9606-ENSP00000477688"/>
<dbReference type="Antibodypedia" id="26099">
    <property type="antibodies" value="85 antibodies from 23 providers"/>
</dbReference>
<dbReference type="DNASU" id="363"/>
<dbReference type="Ensembl" id="ENST00000315520.10">
    <property type="protein sequence ID" value="ENSP00000320247.5"/>
    <property type="gene ID" value="ENSG00000086159.14"/>
</dbReference>
<dbReference type="GeneID" id="363"/>
<dbReference type="KEGG" id="hsa:363"/>
<dbReference type="MANE-Select" id="ENST00000315520.10">
    <property type="protein sequence ID" value="ENSP00000320247.5"/>
    <property type="RefSeq nucleotide sequence ID" value="NM_001652.4"/>
    <property type="RefSeq protein sequence ID" value="NP_001643.2"/>
</dbReference>
<dbReference type="UCSC" id="uc001rvr.2">
    <property type="organism name" value="human"/>
</dbReference>
<dbReference type="AGR" id="HGNC:639"/>
<dbReference type="CTD" id="363"/>
<dbReference type="DisGeNET" id="363"/>
<dbReference type="GeneCards" id="AQP6"/>
<dbReference type="HGNC" id="HGNC:639">
    <property type="gene designation" value="AQP6"/>
</dbReference>
<dbReference type="HPA" id="ENSG00000086159">
    <property type="expression patterns" value="Tissue enriched (kidney)"/>
</dbReference>
<dbReference type="MIM" id="601383">
    <property type="type" value="gene"/>
</dbReference>
<dbReference type="neXtProt" id="NX_Q13520"/>
<dbReference type="OpenTargets" id="ENSG00000086159"/>
<dbReference type="PharmGKB" id="PA24924"/>
<dbReference type="VEuPathDB" id="HostDB:ENSG00000086159"/>
<dbReference type="eggNOG" id="KOG0223">
    <property type="taxonomic scope" value="Eukaryota"/>
</dbReference>
<dbReference type="GeneTree" id="ENSGT00940000161949"/>
<dbReference type="HOGENOM" id="CLU_020019_3_3_1"/>
<dbReference type="InParanoid" id="Q13520"/>
<dbReference type="OMA" id="IGQNTHE"/>
<dbReference type="OrthoDB" id="3222at2759"/>
<dbReference type="PAN-GO" id="Q13520">
    <property type="GO annotations" value="7 GO annotations based on evolutionary models"/>
</dbReference>
<dbReference type="PhylomeDB" id="Q13520"/>
<dbReference type="TreeFam" id="TF312940"/>
<dbReference type="PathwayCommons" id="Q13520"/>
<dbReference type="Reactome" id="R-HSA-432047">
    <property type="pathway name" value="Passive transport by Aquaporins"/>
</dbReference>
<dbReference type="SignaLink" id="Q13520"/>
<dbReference type="BioGRID-ORCS" id="363">
    <property type="hits" value="17 hits in 1145 CRISPR screens"/>
</dbReference>
<dbReference type="GeneWiki" id="AQP6"/>
<dbReference type="GenomeRNAi" id="363"/>
<dbReference type="Pharos" id="Q13520">
    <property type="development level" value="Tbio"/>
</dbReference>
<dbReference type="PRO" id="PR:Q13520"/>
<dbReference type="Proteomes" id="UP000005640">
    <property type="component" value="Chromosome 12"/>
</dbReference>
<dbReference type="RNAct" id="Q13520">
    <property type="molecule type" value="protein"/>
</dbReference>
<dbReference type="Bgee" id="ENSG00000086159">
    <property type="expression patterns" value="Expressed in metanephros cortex and 121 other cell types or tissues"/>
</dbReference>
<dbReference type="ExpressionAtlas" id="Q13520">
    <property type="expression patterns" value="baseline and differential"/>
</dbReference>
<dbReference type="GO" id="GO:0030659">
    <property type="term" value="C:cytoplasmic vesicle membrane"/>
    <property type="evidence" value="ECO:0000250"/>
    <property type="project" value="UniProtKB"/>
</dbReference>
<dbReference type="GO" id="GO:0008519">
    <property type="term" value="F:ammonium channel activity"/>
    <property type="evidence" value="ECO:0000250"/>
    <property type="project" value="UniProtKB"/>
</dbReference>
<dbReference type="GO" id="GO:0035379">
    <property type="term" value="F:carbon dioxide transmembrane transporter activity"/>
    <property type="evidence" value="ECO:0000250"/>
    <property type="project" value="UniProtKB"/>
</dbReference>
<dbReference type="GO" id="GO:0005253">
    <property type="term" value="F:monoatomic anion channel activity"/>
    <property type="evidence" value="ECO:0000250"/>
    <property type="project" value="UniProtKB"/>
</dbReference>
<dbReference type="GO" id="GO:0015112">
    <property type="term" value="F:nitrate transmembrane transporter activity"/>
    <property type="evidence" value="ECO:0000318"/>
    <property type="project" value="GO_Central"/>
</dbReference>
<dbReference type="GO" id="GO:0061797">
    <property type="term" value="F:pH-gated chloride channel activity"/>
    <property type="evidence" value="ECO:0000250"/>
    <property type="project" value="UniProtKB"/>
</dbReference>
<dbReference type="GO" id="GO:0015250">
    <property type="term" value="F:water channel activity"/>
    <property type="evidence" value="ECO:0000314"/>
    <property type="project" value="UniProtKB"/>
</dbReference>
<dbReference type="GO" id="GO:0015670">
    <property type="term" value="P:carbon dioxide transport"/>
    <property type="evidence" value="ECO:0000250"/>
    <property type="project" value="UniProtKB"/>
</dbReference>
<dbReference type="GO" id="GO:0015706">
    <property type="term" value="P:nitrate transmembrane transport"/>
    <property type="evidence" value="ECO:0000250"/>
    <property type="project" value="UniProtKB"/>
</dbReference>
<dbReference type="GO" id="GO:0042476">
    <property type="term" value="P:odontogenesis"/>
    <property type="evidence" value="ECO:0000270"/>
    <property type="project" value="UniProtKB"/>
</dbReference>
<dbReference type="GO" id="GO:0003097">
    <property type="term" value="P:renal water transport"/>
    <property type="evidence" value="ECO:0000314"/>
    <property type="project" value="UniProtKB"/>
</dbReference>
<dbReference type="CDD" id="cd00333">
    <property type="entry name" value="MIP"/>
    <property type="match status" value="1"/>
</dbReference>
<dbReference type="FunFam" id="1.20.1080.10:FF:000003">
    <property type="entry name" value="Lens fiber major intrinsic"/>
    <property type="match status" value="1"/>
</dbReference>
<dbReference type="Gene3D" id="1.20.1080.10">
    <property type="entry name" value="Glycerol uptake facilitator protein"/>
    <property type="match status" value="1"/>
</dbReference>
<dbReference type="InterPro" id="IPR023271">
    <property type="entry name" value="Aquaporin-like"/>
</dbReference>
<dbReference type="InterPro" id="IPR023254">
    <property type="entry name" value="Aquaporin_6"/>
</dbReference>
<dbReference type="InterPro" id="IPR034294">
    <property type="entry name" value="Aquaporin_transptr"/>
</dbReference>
<dbReference type="InterPro" id="IPR000425">
    <property type="entry name" value="MIP"/>
</dbReference>
<dbReference type="InterPro" id="IPR022357">
    <property type="entry name" value="MIP_CS"/>
</dbReference>
<dbReference type="NCBIfam" id="TIGR00861">
    <property type="entry name" value="MIP"/>
    <property type="match status" value="1"/>
</dbReference>
<dbReference type="PANTHER" id="PTHR19139">
    <property type="entry name" value="AQUAPORIN TRANSPORTER"/>
    <property type="match status" value="1"/>
</dbReference>
<dbReference type="PANTHER" id="PTHR19139:SF113">
    <property type="entry name" value="AQUAPORIN-6"/>
    <property type="match status" value="1"/>
</dbReference>
<dbReference type="Pfam" id="PF00230">
    <property type="entry name" value="MIP"/>
    <property type="match status" value="1"/>
</dbReference>
<dbReference type="PRINTS" id="PR02018">
    <property type="entry name" value="AQUAPORIN6"/>
</dbReference>
<dbReference type="PRINTS" id="PR00783">
    <property type="entry name" value="MINTRINSICP"/>
</dbReference>
<dbReference type="SUPFAM" id="SSF81338">
    <property type="entry name" value="Aquaporin-like"/>
    <property type="match status" value="1"/>
</dbReference>
<dbReference type="PROSITE" id="PS00221">
    <property type="entry name" value="MIP"/>
    <property type="match status" value="1"/>
</dbReference>
<organism>
    <name type="scientific">Homo sapiens</name>
    <name type="common">Human</name>
    <dbReference type="NCBI Taxonomy" id="9606"/>
    <lineage>
        <taxon>Eukaryota</taxon>
        <taxon>Metazoa</taxon>
        <taxon>Chordata</taxon>
        <taxon>Craniata</taxon>
        <taxon>Vertebrata</taxon>
        <taxon>Euteleostomi</taxon>
        <taxon>Mammalia</taxon>
        <taxon>Eutheria</taxon>
        <taxon>Euarchontoglires</taxon>
        <taxon>Primates</taxon>
        <taxon>Haplorrhini</taxon>
        <taxon>Catarrhini</taxon>
        <taxon>Hominidae</taxon>
        <taxon>Homo</taxon>
    </lineage>
</organism>